<protein>
    <recommendedName>
        <fullName>Myosin-7</fullName>
    </recommendedName>
    <alternativeName>
        <fullName>Myosin heavy chain 7</fullName>
    </alternativeName>
    <alternativeName>
        <fullName>Myosin heavy chain slow isoform</fullName>
        <shortName>MyHC-slow</shortName>
    </alternativeName>
    <alternativeName>
        <fullName>Myosin heavy chain, cardiac muscle beta isoform</fullName>
        <shortName>MyHC-beta</shortName>
    </alternativeName>
</protein>
<reference key="1">
    <citation type="journal article" date="1990" name="Genomics">
        <title>The complete sequence of the human beta-myosin heavy chain gene and a comparative analysis of its product.</title>
        <authorList>
            <person name="Jaenicke T."/>
            <person name="Diederich K.W."/>
            <person name="Haas W."/>
            <person name="Schleich J."/>
            <person name="Lichter P."/>
            <person name="Pfordt M."/>
            <person name="Bach A."/>
            <person name="Vosberg H.P."/>
        </authorList>
    </citation>
    <scope>NUCLEOTIDE SEQUENCE [GENOMIC DNA / MRNA]</scope>
    <scope>VARIANT SER-1124</scope>
</reference>
<reference key="2">
    <citation type="journal article" date="1990" name="Nucleic Acids Res.">
        <title>Complete sequence and organization of the human cardiac beta-myosin heavy chain gene.</title>
        <authorList>
            <person name="Liew C.-C."/>
            <person name="Sole M.J."/>
            <person name="Yamauchi-Takihara K."/>
            <person name="Kellam B."/>
            <person name="Anderson D.H."/>
            <person name="Lin L."/>
            <person name="Liew J."/>
        </authorList>
    </citation>
    <scope>NUCLEOTIDE SEQUENCE [GENOMIC DNA]</scope>
    <scope>VARIANT GLU-107</scope>
</reference>
<reference key="3">
    <citation type="journal article" date="2000" name="J. Cell. Biochem.">
        <title>The human beta-myosin heavy chain gene: sequence diversity and functional characteristics of the protein.</title>
        <authorList>
            <person name="Wendel B."/>
            <person name="Reinhard R."/>
            <person name="Wachtendorf U."/>
            <person name="Zacharzowsky U.B."/>
            <person name="Osterziel K.J."/>
            <person name="Schulte H.D."/>
            <person name="Haase H."/>
            <person name="Hoehe M.R."/>
            <person name="Morano I."/>
        </authorList>
    </citation>
    <scope>NUCLEOTIDE SEQUENCE [GENOMIC DNA]</scope>
</reference>
<reference key="4">
    <citation type="submission" date="2008-05" db="EMBL/GenBank/DDBJ databases">
        <title>Diverse clinicopathologic profiles and determinants of progressive heart failure in hypertrophic cardiomyopathy.</title>
        <authorList>
            <person name="Smaniotto G."/>
            <person name="Melacini P."/>
        </authorList>
    </citation>
    <scope>NUCLEOTIDE SEQUENCE [MRNA]</scope>
</reference>
<reference key="5">
    <citation type="submission" date="2006-12" db="EMBL/GenBank/DDBJ databases">
        <authorList>
            <consortium name="NHLBI resequencing and genotyping service (RS&amp;G)"/>
        </authorList>
    </citation>
    <scope>NUCLEOTIDE SEQUENCE [GENOMIC DNA]</scope>
</reference>
<reference key="6">
    <citation type="submission" date="2005-09" db="EMBL/GenBank/DDBJ databases">
        <authorList>
            <person name="Mural R.J."/>
            <person name="Istrail S."/>
            <person name="Sutton G.G."/>
            <person name="Florea L."/>
            <person name="Halpern A.L."/>
            <person name="Mobarry C.M."/>
            <person name="Lippert R."/>
            <person name="Walenz B."/>
            <person name="Shatkay H."/>
            <person name="Dew I."/>
            <person name="Miller J.R."/>
            <person name="Flanigan M.J."/>
            <person name="Edwards N.J."/>
            <person name="Bolanos R."/>
            <person name="Fasulo D."/>
            <person name="Halldorsson B.V."/>
            <person name="Hannenhalli S."/>
            <person name="Turner R."/>
            <person name="Yooseph S."/>
            <person name="Lu F."/>
            <person name="Nusskern D.R."/>
            <person name="Shue B.C."/>
            <person name="Zheng X.H."/>
            <person name="Zhong F."/>
            <person name="Delcher A.L."/>
            <person name="Huson D.H."/>
            <person name="Kravitz S.A."/>
            <person name="Mouchard L."/>
            <person name="Reinert K."/>
            <person name="Remington K.A."/>
            <person name="Clark A.G."/>
            <person name="Waterman M.S."/>
            <person name="Eichler E.E."/>
            <person name="Adams M.D."/>
            <person name="Hunkapiller M.W."/>
            <person name="Myers E.W."/>
            <person name="Venter J.C."/>
        </authorList>
    </citation>
    <scope>NUCLEOTIDE SEQUENCE [LARGE SCALE GENOMIC DNA]</scope>
</reference>
<reference key="7">
    <citation type="journal article" date="2004" name="Genome Res.">
        <title>The status, quality, and expansion of the NIH full-length cDNA project: the Mammalian Gene Collection (MGC).</title>
        <authorList>
            <consortium name="The MGC Project Team"/>
        </authorList>
    </citation>
    <scope>NUCLEOTIDE SEQUENCE [LARGE SCALE MRNA]</scope>
</reference>
<reference key="8">
    <citation type="journal article" date="1989" name="Proc. Natl. Acad. Sci. U.S.A.">
        <title>Characterization of human cardiac myosin heavy chain genes.</title>
        <authorList>
            <person name="Yamauchi-Takihara K."/>
            <person name="Sole M.J."/>
            <person name="Liew J."/>
            <person name="Ing D."/>
            <person name="Liew C.-C."/>
        </authorList>
    </citation>
    <scope>NUCLEOTIDE SEQUENCE [GENOMIC DNA] OF 1-176</scope>
    <scope>VARIANT GLU-107</scope>
</reference>
<reference key="9">
    <citation type="journal article" date="1989" name="Proc. Natl. Acad. Sci. U.S.A.">
        <authorList>
            <person name="Yamauchi-Takihara K."/>
            <person name="Sole M.J."/>
            <person name="Liew J."/>
            <person name="Ing D."/>
            <person name="Liew C.-C."/>
        </authorList>
    </citation>
    <scope>ERRATUM OF PUBMED:2726733</scope>
</reference>
<reference key="10">
    <citation type="journal article" date="1993" name="J. Clin. Invest.">
        <title>Skeletal muscle expression and abnormal function of beta-myosin in hypertrophic cardiomyopathy.</title>
        <authorList>
            <person name="Cuda G."/>
            <person name="Fananapazir L."/>
            <person name="Zhu W.S."/>
            <person name="Sellers J.R."/>
            <person name="Epstein N.D."/>
        </authorList>
    </citation>
    <scope>NUCLEOTIDE SEQUENCE [MRNA] OF 370-434</scope>
    <scope>TISSUE SPECIFICITY</scope>
    <scope>VARIANT GLN-403</scope>
    <source>
        <tissue>Skeletal muscle</tissue>
    </source>
</reference>
<reference key="11">
    <citation type="journal article" date="1989" name="Hum. Genet.">
        <title>Isolation and characterization of the complete human beta-myosin heavy chain gene.</title>
        <authorList>
            <person name="Diederich K.W."/>
            <person name="Eisele I."/>
            <person name="Ried T."/>
            <person name="Jaenicke T."/>
            <person name="Lichter P."/>
            <person name="Vosberg H.P."/>
        </authorList>
    </citation>
    <scope>NUCLEOTIDE SEQUENCE [GENOMIC DNA] OF 653-720</scope>
</reference>
<reference key="12">
    <citation type="journal article" date="1986" name="Eur. J. Biochem.">
        <title>Partial characterization of the human beta-myosin heavy-chain gene which is expressed in heart and skeletal muscle.</title>
        <authorList>
            <person name="Lichter P."/>
            <person name="Umeda P.K."/>
            <person name="Levin J.E."/>
            <person name="Vosberg H.P."/>
        </authorList>
    </citation>
    <scope>NUCLEOTIDE SEQUENCE [GENOMIC DNA] OF 684-721; 975-1111 AND 1853-1935</scope>
</reference>
<reference key="13">
    <citation type="journal article" date="1990" name="Eur. J. Biochem.">
        <title>Identification of three developmentally controlled isoforms of human myosin heavy chains.</title>
        <authorList>
            <person name="Bober E."/>
            <person name="Buchberger-Seidl A."/>
            <person name="Braun T."/>
            <person name="Singh S."/>
            <person name="Goedde H.W."/>
            <person name="Arnold H.H."/>
        </authorList>
    </citation>
    <scope>NUCLEOTIDE SEQUENCE [MRNA] OF 785-1935</scope>
    <source>
        <tissue>Skeletal muscle</tissue>
    </source>
</reference>
<reference key="14">
    <citation type="journal article" date="1986" name="Nucleic Acids Res.">
        <title>Characterization of diverse forms of myosin heavy chain expressed in adult human skeletal muscle.</title>
        <authorList>
            <person name="Saez L."/>
            <person name="Leinwand L.A."/>
        </authorList>
    </citation>
    <scope>NUCLEOTIDE SEQUENCE [MRNA] OF 1310-1935</scope>
</reference>
<reference key="15">
    <citation type="submission" date="1988-03" db="EMBL/GenBank/DDBJ databases">
        <authorList>
            <person name="Leinwand L.A."/>
        </authorList>
    </citation>
    <scope>SEQUENCE REVISION</scope>
</reference>
<reference key="16">
    <citation type="journal article" date="1987" name="Hum. Genet.">
        <title>Construction of a human ventricular cDNA library and characterization of a beta myosin heavy chain cDNA clone.</title>
        <authorList>
            <person name="Jandreski M.A."/>
            <person name="Liew C.-C."/>
        </authorList>
    </citation>
    <scope>NUCLEOTIDE SEQUENCE [MRNA] OF 1393-1935</scope>
</reference>
<reference key="17">
    <citation type="journal article" date="1988" name="J. Clin. Invest.">
        <title>Molecular cloning and characterization of human cardiac alpha- and beta-form myosin heavy chain complementary DNA clones. Regulation of expression during development and pressure overload in human atrium.</title>
        <authorList>
            <person name="Kurabayashi M."/>
            <person name="Tsuchimochi H."/>
            <person name="Komuro I."/>
            <person name="Takaku F."/>
            <person name="Yazaki Y."/>
        </authorList>
    </citation>
    <scope>NUCLEOTIDE SEQUENCE [MRNA] OF 1412-1935</scope>
</reference>
<reference key="18">
    <citation type="journal article" date="1987" name="Nucleic Acids Res.">
        <title>Human cardiac myosin heavy chain genes and their linkage in the genome.</title>
        <authorList>
            <person name="Saez L.J."/>
            <person name="Gianola K.M."/>
            <person name="McNally E.M."/>
            <person name="Feghali R."/>
            <person name="Eddy R."/>
            <person name="Shows T.B."/>
            <person name="Leinwand L.A."/>
        </authorList>
    </citation>
    <scope>NUCLEOTIDE SEQUENCE [MRNA] OF 1854-1935</scope>
</reference>
<reference key="19">
    <citation type="journal article" date="1994" name="Biochem. Biophys. Res. Commun.">
        <title>Possible gene dose effect of a mutant cardiac beta-myosin heavy chain gene on the clinical expression of familial hypertrophic cardiomyopathy.</title>
        <authorList>
            <person name="Nishi H."/>
            <person name="Kimura A."/>
            <person name="Harada H."/>
            <person name="Adachi K."/>
            <person name="Koga Y."/>
            <person name="Sasazuki T."/>
            <person name="Toshima H."/>
        </authorList>
    </citation>
    <scope>VARIANT CMH1 LYS-935</scope>
</reference>
<reference key="20">
    <citation type="journal article" date="1995" name="Am. J. Med. Genet.">
        <title>Missense mutation of the beta-cardiac myosin heavy-chain gene in hypertrophic cardiomyopathy.</title>
        <authorList>
            <person name="Arai S."/>
            <person name="Matsuoka R."/>
            <person name="Hirayama K."/>
            <person name="Sukurai H."/>
            <person name="Tamura M."/>
            <person name="Ozawa T."/>
            <person name="Kimura M."/>
            <person name="Imamura S."/>
            <person name="Furutani Y."/>
            <person name="Joh-o K."/>
            <person name="Kawana M."/>
            <person name="Takao A."/>
            <person name="Hosoda S."/>
            <person name="Momma K."/>
        </authorList>
    </citation>
    <scope>VARIANTS CMH1 ILE-59; VAL-587; SER-602; LEU-731 AND MET-736</scope>
</reference>
<reference key="21">
    <citation type="journal article" date="2005" name="Circulation">
        <title>Gene mutations in apical hypertrophic cardiomyopathy.</title>
        <authorList>
            <person name="Arad M."/>
            <person name="Penas-Lado M."/>
            <person name="Monserrat L."/>
            <person name="Maron B.J."/>
            <person name="Sherrid M."/>
            <person name="Ho C.Y."/>
            <person name="Barr S."/>
            <person name="Karim A."/>
            <person name="Olson T.M."/>
            <person name="Kamisago M."/>
            <person name="Seidman J.G."/>
            <person name="Seidman C.E."/>
        </authorList>
    </citation>
    <scope>INVOLVEMENT IN CMH1</scope>
    <scope>VARIANTS CMH1 HIS-243; ASP-497 AND GLY-906</scope>
</reference>
<reference key="22">
    <citation type="journal article" date="2006" name="Neuromuscul. Disord.">
        <title>Novel slow-skeletal myosin (MYH7) mutation in the original myosin storage myopathy kindred.</title>
        <authorList>
            <person name="Dye D.E."/>
            <person name="Azzarelli B."/>
            <person name="Goebel H.H."/>
            <person name="Laing N.G."/>
        </authorList>
    </citation>
    <scope>INVOLVEMENT IN CMYO7A</scope>
    <scope>VARIANT CMYO7A PRO-1793</scope>
</reference>
<reference key="23">
    <citation type="journal article" date="2008" name="Circulation">
        <title>Mutations in sarcomere protein genes in left ventricular noncompaction.</title>
        <authorList>
            <person name="Klaassen S."/>
            <person name="Probst S."/>
            <person name="Oechslin E."/>
            <person name="Gerull B."/>
            <person name="Krings G."/>
            <person name="Schuler P."/>
            <person name="Greutmann M."/>
            <person name="Huerlimann D."/>
            <person name="Yegitbasi M."/>
            <person name="Pons L."/>
            <person name="Gramlich M."/>
            <person name="Drenckhahn J.D."/>
            <person name="Heuser A."/>
            <person name="Berger F."/>
            <person name="Jenni R."/>
            <person name="Thierfelder L."/>
        </authorList>
    </citation>
    <scope>INVOLVEMENT IN LVNC5</scope>
    <scope>VARIANTS LVNC5 ASP-239 DEL; HIS-243; LEU-252; CYS-1359 AND THR-1776</scope>
</reference>
<reference key="24">
    <citation type="journal article" date="2008" name="Pediatr. Cardiol.">
        <title>Familial hypertrophic cardiomyopathy associated with cardiac beta-myosin heavy chain and troponin I mutations.</title>
        <authorList>
            <person name="Frazier A."/>
            <person name="Judge D.P."/>
            <person name="Schulman S.P."/>
            <person name="Johnson N."/>
            <person name="Holmes K.W."/>
            <person name="Murphy A.M."/>
        </authorList>
    </citation>
    <scope>INVOLVEMENT IN CMH1</scope>
    <scope>VARIANT CMH1 SER-453</scope>
</reference>
<reference key="25">
    <citation type="journal article" date="2010" name="Circ. Res.">
        <title>Myomasp/LRRC39, a heart- and muscle-specific protein, is a novel component of the sarcomeric M-band and is involved in stretch sensing.</title>
        <authorList>
            <person name="Will R.D."/>
            <person name="Eden M."/>
            <person name="Just S."/>
            <person name="Hansen A."/>
            <person name="Eder A."/>
            <person name="Frank D."/>
            <person name="Kuhn C."/>
            <person name="Seeger T.S."/>
            <person name="Oehl U."/>
            <person name="Wiemann S."/>
            <person name="Korn B."/>
            <person name="Koegl M."/>
            <person name="Rottbauer W."/>
            <person name="Eschenhagen T."/>
            <person name="Katus H.A."/>
            <person name="Frey N."/>
        </authorList>
    </citation>
    <scope>INTERACTION WITH LRRC39</scope>
</reference>
<reference key="26">
    <citation type="journal article" date="2010" name="J. Biol. Chem.">
        <title>A protein interaction network for Ecm29 links the 26 S proteasome to molecular motors and endosomal components.</title>
        <authorList>
            <person name="Gorbea C."/>
            <person name="Pratt G."/>
            <person name="Ustrell V."/>
            <person name="Bell R."/>
            <person name="Sahasrabudhe S."/>
            <person name="Hughes R.E."/>
            <person name="Rechsteiner M."/>
        </authorList>
    </citation>
    <scope>INTERACTION WITH ECPAS</scope>
</reference>
<reference key="27">
    <citation type="journal article" date="2011" name="Circ. Cardiovasc. Genet.">
        <title>Mutations in the sarcomere gene MYH7 in Ebstein anomaly.</title>
        <authorList>
            <person name="Postma A.V."/>
            <person name="van Engelen K."/>
            <person name="van de Meerakker J."/>
            <person name="Rahman T."/>
            <person name="Probst S."/>
            <person name="Baars M.J."/>
            <person name="Bauer U."/>
            <person name="Pickardt T."/>
            <person name="Sperling S.R."/>
            <person name="Berger F."/>
            <person name="Moorman A.F."/>
            <person name="Mulder B.J."/>
            <person name="Thierfelder L."/>
            <person name="Keavney B."/>
            <person name="Goodship J."/>
            <person name="Klaassen S."/>
        </authorList>
    </citation>
    <scope>INVOLVEMENT IN CMD1S</scope>
    <scope>VARIANTS CMD1S ASP-283; ASN-350; PRO-390; GLU-1220 DEL; ASN-1459; LYS-1573 AND LYS-1918</scope>
</reference>
<reference key="28">
    <citation type="journal article" date="2015" name="Neuromuscul. Disord.">
        <title>Homozygous MYH7 R1820W mutation results in recessive myosin storage myopathy: scapuloperoneal and respiratory weakness with dilated cardiomyopathy.</title>
        <authorList>
            <person name="Yueceyar N."/>
            <person name="Ayhan O."/>
            <person name="Karasoy H."/>
            <person name="Tolun A."/>
        </authorList>
    </citation>
    <scope>INVOLVEMENT IN CMYO7B</scope>
    <scope>VARIANT CMYO7B TRP-1820</scope>
</reference>
<reference key="29">
    <citation type="journal article" date="2006" name="Proc. Natl. Acad. Sci. U.S.A.">
        <title>Crystal structures of human cardiac beta-myosin II S2-Delta provide insight into the functional role of the S2 subfragment.</title>
        <authorList>
            <person name="Blankenfeldt W."/>
            <person name="Thoma N.H."/>
            <person name="Wray J.S."/>
            <person name="Gautel M."/>
            <person name="Schlichting I."/>
        </authorList>
    </citation>
    <scope>X-RAY CRYSTALLOGRAPHY (2.50 ANGSTROMS) OF 838-963</scope>
    <scope>X-RAY CRYSTALLOGRAPHY (2.50 ANGSTROMS) OF 838-963 OF VARIANT CMH1 LYS-924</scope>
</reference>
<reference key="30">
    <citation type="journal article" date="2015" name="Nat. Commun.">
        <title>Structural basis for drug-induced allosteric changes to human beta-cardiac myosin motor activity.</title>
        <authorList>
            <person name="Winkelmann D.A."/>
            <person name="Forgacs E."/>
            <person name="Miller M.T."/>
            <person name="Stock A.M."/>
        </authorList>
    </citation>
    <scope>X-RAY CRYSTALLOGRAPHY (2.25 ANGSTROMS) OF 1-787 IN COMPLEX WITH AN INHIBITOR</scope>
    <scope>FUNCTION</scope>
</reference>
<reference key="31">
    <citation type="journal article" date="2015" name="Proc. Natl. Acad. Sci. U.S.A.">
        <title>Skip residues modulate the structural properties of the myosin rod and guide thick filament assembly.</title>
        <authorList>
            <person name="Taylor K.C."/>
            <person name="Buvoli M."/>
            <person name="Korkmaz E.N."/>
            <person name="Buvoli A."/>
            <person name="Zheng Y."/>
            <person name="Heinze N.T."/>
            <person name="Cui Q."/>
            <person name="Leinwand L.A."/>
            <person name="Rayment I."/>
        </authorList>
    </citation>
    <scope>X-RAY CRYSTALLOGRAPHY (2.33 ANGSTROMS) OF 1173-1238; 1361-1425; 1551-1609 AND 1777-1855</scope>
    <scope>COILED COIL</scope>
    <scope>DOMAIN</scope>
</reference>
<reference key="32">
    <citation type="journal article" date="2016" name="Proteins">
        <title>A composite approach towards a complete model of the myosin rod.</title>
        <authorList>
            <person name="Korkmaz E.N."/>
            <person name="Taylor K.C."/>
            <person name="Andreas M.P."/>
            <person name="Ajay G."/>
            <person name="Heinze N.T."/>
            <person name="Cui Q."/>
            <person name="Rayment I."/>
        </authorList>
    </citation>
    <scope>X-RAY CRYSTALLOGRAPHY (2.10 ANGSTROMS) OF 1468-1692</scope>
    <scope>COILED COIL</scope>
</reference>
<reference key="33">
    <citation type="journal article" date="1990" name="Cell">
        <title>A molecular basis for familial hypertrophic cardiomyopathy: a beta cardiac myosin heavy chain gene missense mutation.</title>
        <authorList>
            <person name="Geisterfer-Lowrance A.A.T."/>
            <person name="Kass S."/>
            <person name="Tanigawa G."/>
            <person name="Vosberg H.-P."/>
            <person name="McKenna W."/>
            <person name="Seidman C.E."/>
            <person name="Seidman J.G."/>
        </authorList>
    </citation>
    <scope>VARIANT CMH1 GLN-403</scope>
</reference>
<reference key="34">
    <citation type="journal article" date="1992" name="Biochem. Biophys. Res. Commun.">
        <title>Novel missense mutation in cardiac beta myosin heavy chain gene found in a Japanese patient with hypertrophic cardiomyopathy.</title>
        <authorList>
            <person name="Nishi H."/>
            <person name="Kimura A."/>
            <person name="Harada H."/>
            <person name="Toshima H."/>
            <person name="Sasazuki T."/>
        </authorList>
    </citation>
    <scope>VARIANT CMH1 ASN-615</scope>
</reference>
<reference key="35">
    <citation type="journal article" date="1992" name="Circulation">
        <title>Differences in clinical expression of hypertrophic cardiomyopathy associated with two distinct mutations in the beta-myosin heavy chain gene. A 908Leu--&gt;Val mutation and a 403Arg--&gt;Gln mutation.</title>
        <authorList>
            <person name="Epstein N.D."/>
            <person name="Cohn G.M."/>
            <person name="Cyran F."/>
            <person name="Fananapazir L."/>
        </authorList>
    </citation>
    <scope>VARIANTS CMH1 GLN-403 AND VAL-908</scope>
</reference>
<reference key="36">
    <citation type="journal article" date="1992" name="N. Engl. J. Med.">
        <title>Characteristics and prognostic implications of myosin missense mutations in familial hypertrophic cardiomyopathy.</title>
        <authorList>
            <person name="Watkins H."/>
            <person name="Rosenzweig A."/>
            <person name="Hwang D.S."/>
            <person name="Levi T."/>
            <person name="McKenna W."/>
            <person name="Seidmann C.E."/>
            <person name="Seidmann J.G."/>
        </authorList>
    </citation>
    <scope>VARIANTS CMH1 GLN-249; GLN-403; CYS-453; MET-606 AND LYS-949</scope>
</reference>
<reference key="37">
    <citation type="journal article" date="1993" name="Am. J. Hum. Genet.">
        <title>Independent origin of identical beta cardiac myosin heavy-chain mutations in hypertrophic cardiomyopathy.</title>
        <authorList>
            <person name="Watkins H."/>
            <person name="Thierfelder L."/>
            <person name="Anan R."/>
            <person name="Jarcho J."/>
            <person name="Matsumori A."/>
            <person name="McKenna W."/>
            <person name="Seidman J.G."/>
            <person name="Seidman C.E."/>
        </authorList>
    </citation>
    <scope>VARIANTS CMH1 GLN-403; CYS-453; ARG-584 AND MET-606</scope>
</reference>
<reference key="38">
    <citation type="journal article" date="1993" name="Biochem. Biophys. Res. Commun.">
        <title>A missense mutation of cardiac beta-myosin heavy chain gene linked to familial hypertrophic cardiomyopathy in affected Japanese families.</title>
        <authorList>
            <person name="Harada H."/>
            <person name="Kimura A."/>
            <person name="Nishi H."/>
            <person name="Sasazuki T."/>
            <person name="Toshima H."/>
        </authorList>
    </citation>
    <scope>VARIANT CMH1 GLY-778</scope>
</reference>
<reference key="39">
    <citation type="journal article" date="1993" name="Br. Heart J.">
        <title>Identification of a mutation in the beta cardiac myosin heavy chain gene in a family with hypertrophic cardiomyopathy.</title>
        <authorList>
            <person name="Al-Mahdawi S."/>
            <person name="Chamberlain S."/>
            <person name="Cleland J."/>
            <person name="Nihoyannopoulos P."/>
            <person name="Gilligan D."/>
            <person name="French J."/>
            <person name="Choudhury L."/>
            <person name="Williamson R."/>
            <person name="Oakley C."/>
        </authorList>
    </citation>
    <scope>VARIANT CMH1 VAL-908</scope>
</reference>
<reference key="40">
    <citation type="journal article" date="1993" name="Hum. Mol. Genet.">
        <title>Identification of a new missense mutation at Arg403, a CpG mutation hotspot, in exon 13 of the beta-myosin heavy chain gene in hypertrophic cardiomyopathy.</title>
        <authorList>
            <person name="Moolman J.C."/>
            <person name="Brink P.A."/>
            <person name="Corfield V.A."/>
        </authorList>
    </citation>
    <scope>VARIANT CMH1 TRP-403</scope>
</reference>
<reference key="41">
    <citation type="journal article" date="1993" name="J. Clin. Invest.">
        <title>Familial hypertrophic cardiomyopathy. Microsatellite haplotyping and identification of a hot spot for mutations in the beta-myosin heavy chain gene.</title>
        <authorList>
            <person name="Dausse E."/>
            <person name="Komajda M."/>
            <person name="Fetler L."/>
            <person name="Dubourg O."/>
            <person name="Dufour C."/>
            <person name="Carrier L."/>
            <person name="Wisnewsky C."/>
            <person name="Bercovici J."/>
            <person name="Hengstenberg C."/>
            <person name="Al-Mahdawi S."/>
        </authorList>
    </citation>
    <scope>VARIANTS CMH1 LEU-403 AND TRP-403</scope>
</reference>
<reference key="42">
    <citation type="journal article" date="1993" name="Proc. Natl. Acad. Sci. U.S.A.">
        <title>Missense mutations in the beta-myosin heavy-chain gene cause central core disease in hypertrophic cardiomyopathy.</title>
        <authorList>
            <person name="Fananapazir L."/>
            <person name="Dalakas M.C."/>
            <person name="Cyran F."/>
            <person name="Cohn G."/>
            <person name="Epstein N.D."/>
        </authorList>
    </citation>
    <scope>VARIANTS CMH1 GLU-256 AND ARG-741</scope>
</reference>
<reference key="43">
    <citation type="journal article" date="1994" name="Hum. Mol. Genet.">
        <title>A new missense mutation, Arg719Gln, in the beta-cardiac heavy chain myosin gene of patients with familial hypertrophic cardiomyopathy.</title>
        <authorList>
            <person name="Consevage M.W."/>
            <person name="Salada G.C."/>
            <person name="Baylen B.G."/>
            <person name="Ladda R.L."/>
            <person name="Rogan P.K."/>
        </authorList>
    </citation>
    <scope>VARIANT CMH1 GLN-719</scope>
</reference>
<reference key="44">
    <citation type="journal article" date="1994" name="Hum. Mol. Genet.">
        <title>Isolation of a de novo mutant myocardial beta MHC protein in a pedigree with hypertrophic cardiomyopathy.</title>
        <authorList>
            <person name="Greve G."/>
            <person name="Bachinski L."/>
            <person name="Friedman D.L."/>
            <person name="Czernuzewicz G."/>
            <person name="Anan R."/>
            <person name="Towbin J.A."/>
            <person name="Seidman C.E."/>
            <person name="Roberts R."/>
        </authorList>
    </citation>
    <scope>VARIANT CMH1 TRP-719</scope>
</reference>
<reference key="45">
    <citation type="journal article" date="1994" name="J. Clin. Invest.">
        <title>Prognostic implications of novel beta cardiac myosin heavy chain gene mutations that cause familial hypertrophic cardiomyopathy.</title>
        <authorList>
            <person name="Anan R."/>
            <person name="Greve G."/>
            <person name="Thierfelder L."/>
            <person name="Watkins H."/>
            <person name="McKenna W."/>
            <person name="Solomon S."/>
            <person name="Vecchio C."/>
            <person name="Shono H."/>
            <person name="Nakao S."/>
            <person name="Tanaka H."/>
            <person name="Mares A. Jr."/>
            <person name="Towbin J.A."/>
            <person name="Spirito P."/>
            <person name="Roberts R."/>
            <person name="Seidman J.G."/>
            <person name="Seidman C.E."/>
        </authorList>
    </citation>
    <scope>VARIANTS CMH1 CYS-513; ARG-716 AND TRP-719</scope>
</reference>
<reference key="46">
    <citation type="journal article" date="1995" name="Hum. Mutat.">
        <title>Identification of a novel Ala797Thr mutation in exon 21 of the beta-myosin heavy chain gene in hypertrophic cardiomyopathy.</title>
        <authorList>
            <person name="Moolman J.C."/>
            <person name="Brink P.A."/>
            <person name="Corfield V.A."/>
        </authorList>
    </citation>
    <scope>VARIANT CMH1 THR-797</scope>
</reference>
<reference key="47">
    <citation type="journal article" date="1995" name="Proc. Natl. Acad. Sci. U.S.A.">
        <title>Structural interpretation of the mutations in the beta-cardiac myosin that have been implicated in familial hypertrophic cardiomyopathy.</title>
        <authorList>
            <person name="Rayment I."/>
            <person name="Holden H.M."/>
            <person name="Sellers J.R."/>
            <person name="Fananapazir L."/>
            <person name="Epstein N.D."/>
        </authorList>
    </citation>
    <scope>VARIANTS CMH1 ILE-124; CYS-162; LYS-187; LYS-222; LEU-244; HIS-663; ASN-782 AND HIS-870</scope>
</reference>
<reference key="48">
    <citation type="journal article" date="1996" name="Hum. Genet.">
        <title>Malignant familial hypertrophic cardiomyopathy in a family with a 453Arg--&gt;Cys mutation in the beta-myosin heavy chain gene: coexistence of sudden death and end-stage heart failure.</title>
        <authorList>
            <person name="Ko Y.-L."/>
            <person name="Chen J.-J."/>
            <person name="Tang T.-K."/>
            <person name="Cheng J.-J."/>
            <person name="Lin S.-Y."/>
            <person name="Liou Y.-C."/>
            <person name="Kuan P."/>
            <person name="Wu C.-W."/>
            <person name="Lien W.-P."/>
            <person name="Liew C.-C."/>
        </authorList>
    </citation>
    <scope>VARIANT CMH1 CYS-453</scope>
</reference>
<reference key="49">
    <citation type="journal article" date="1996" name="J. Mol. Cell. Cardiol.">
        <title>Identification of a novel missense mutation in the cardiac beta-myosin heavy chain gene in a Chinese patient with sporadic hypertrophic cardiomyopathy.</title>
        <authorList>
            <person name="Kuang S.-Q."/>
            <person name="Yu J.-D."/>
            <person name="Lu L."/>
            <person name="He L.-M."/>
            <person name="Gong L.-S."/>
            <person name="Chen S.-J."/>
            <person name="Chen Z."/>
        </authorList>
    </citation>
    <scope>VARIANT CMH1 ASN-383</scope>
</reference>
<reference key="50">
    <citation type="journal article" date="1998" name="Heart">
        <title>Coexistence of mitochondrial DNA and beta myosin heavy chain mutations in hypertrophic cardiomyopathy with late congestive heart failure.</title>
        <authorList>
            <person name="Arbustini E."/>
            <person name="Fasani R."/>
            <person name="Morbini P."/>
            <person name="Diegoli M."/>
            <person name="Grasso M."/>
            <person name="Dal Bello B."/>
            <person name="Marangoni E."/>
            <person name="Banfi P."/>
            <person name="Banchieri N."/>
            <person name="Bellini O."/>
            <person name="Comi G."/>
            <person name="Narula J."/>
            <person name="Campana C."/>
            <person name="Gavazzi A."/>
            <person name="Danesino C."/>
            <person name="Vigano M."/>
        </authorList>
    </citation>
    <scope>VARIANTS CMH1 GLN-249 AND GLU-450</scope>
</reference>
<reference key="51">
    <citation type="journal article" date="1999" name="Heart">
        <authorList>
            <person name="Arbustini E."/>
            <person name="Fasani R."/>
            <person name="Morbini P."/>
            <person name="Diegoli M."/>
            <person name="Grasso M."/>
            <person name="Dal Bello B."/>
            <person name="Marangoni E."/>
            <person name="Banfi P."/>
            <person name="Banchieri N."/>
            <person name="Bellini O."/>
            <person name="Comi G."/>
            <person name="Narula J."/>
            <person name="Campana C."/>
            <person name="Gavazzi A."/>
            <person name="Danesino C."/>
            <person name="Vigano M."/>
        </authorList>
    </citation>
    <scope>ERRATUM OF PUBMED:10065021</scope>
</reference>
<reference key="52">
    <citation type="journal article" date="1998" name="Hum. Genet.">
        <title>A high risk phenotype of hypertrophic cardiomyopathy associated with a compound genotype of two mutated beta-myosin heavy chain genes.</title>
        <authorList>
            <person name="Jeschke B."/>
            <person name="Uhl K."/>
            <person name="Weist B."/>
            <person name="Schroder D."/>
            <person name="Meitinger T."/>
            <person name="Dohlemann C."/>
            <person name="Vosberg H.-P."/>
        </authorList>
    </citation>
    <scope>VARIANTS CMH1 THR-349 AND TRP-719</scope>
</reference>
<reference key="53">
    <citation type="journal article" date="1998" name="Hum. Mutat.">
        <title>Genotype-phenotype analysis in four families with mutations in beta-myosin heavy chain gene responsible for familial hypertrophic cardiomyopathy.</title>
        <authorList>
            <person name="Tesson F."/>
            <person name="Richard P."/>
            <person name="Charron P."/>
            <person name="Mathieu B."/>
            <person name="Cruaud C."/>
            <person name="Carrier L."/>
            <person name="Dubourg O."/>
            <person name="Lautie N."/>
            <person name="Desnos M."/>
            <person name="Millaire A."/>
            <person name="Isnard R."/>
            <person name="Hagege A.A."/>
            <person name="Bouhour J.-B."/>
            <person name="Bennaceur M."/>
            <person name="Hainque B."/>
            <person name="Guicheney P."/>
            <person name="Schwartz K."/>
            <person name="Komajda M."/>
        </authorList>
    </citation>
    <scope>VARIANTS CMH1 THR-263; TRP-719; CYS-723 AND GLU-930 DEL</scope>
</reference>
<reference key="54">
    <citation type="journal article" date="1998" name="J. Am. Coll. Cardiol.">
        <title>The cardiac beta-myosin heavy chain gene is not the predominant gene for hypertrophic cardiomyopathy in the Finnish population.</title>
        <authorList>
            <person name="Jaeaeskelaeinen P."/>
            <person name="Soranta M."/>
            <person name="Miettinen R."/>
            <person name="Saarinen L."/>
            <person name="Pihlajamaeki J."/>
            <person name="Silvennoinen K."/>
            <person name="Tikanoja T."/>
            <person name="Laakso M."/>
            <person name="Kuusisto J."/>
        </authorList>
    </citation>
    <scope>VARIANTS CMH1 SER-696 AND TRP-719</scope>
</reference>
<reference key="55">
    <citation type="journal article" date="1999" name="Am. J. Hum. Genet.">
        <title>The origins of hypertrophic cardiomyopathy-causing mutations in two South African subpopulations: a unique profile of both independent and founder events.</title>
        <authorList>
            <person name="Moolman-Smook J.C."/>
            <person name="De Lange W.J."/>
            <person name="Bruwer E.C.D."/>
            <person name="Brink P.A."/>
            <person name="Corfield V.A."/>
        </authorList>
    </citation>
    <scope>VARIANTS CMH1 TRP-403; LYS-499; GLN-719 AND THR-797</scope>
</reference>
<reference key="56">
    <citation type="journal article" date="1999" name="Clin. Genet.">
        <title>Adult-onset familial hypertrophic cardiomyopathy caused by a novel mutation, R694C, in the MYH7 gene.</title>
        <authorList>
            <person name="Andersen P.S."/>
            <person name="Havndrup O."/>
            <person name="Bundgaard H."/>
            <person name="Larsen L.A."/>
            <person name="Vuust J."/>
            <person name="Kjeldsen K."/>
            <person name="Christiansen M."/>
        </authorList>
    </citation>
    <scope>VARIANT CMH1 CYS-694</scope>
</reference>
<reference key="57">
    <citation type="journal article" date="1999" name="J. Mol. Cell. Cardiol.">
        <title>Familial hypertrophic cardiomyopathy associated with a novel missense mutation affecting the ATP-binding region of the cardiac beta-myosin heavy chain.</title>
        <authorList>
            <person name="Bundgaard H."/>
            <person name="Havndrup O."/>
            <person name="Andersen P.S."/>
            <person name="Larsen L.A."/>
            <person name="Brandt N.J."/>
            <person name="Vuust J."/>
            <person name="Kjeldsen K."/>
            <person name="Christiansen M."/>
        </authorList>
    </citation>
    <scope>VARIANT CMH1 THR-190</scope>
</reference>
<reference key="58">
    <citation type="journal article" date="2000" name="Hum. Mutat.">
        <title>A novel missense mutation (R712L) adjacent to the 'active thiol' region of the cardiac beta-myosin heavy chain gene causing hypertrophic cardiomyopathy in an Indian family.</title>
        <authorList>
            <person name="Sakthivel S."/>
            <person name="Joseph P.K."/>
            <person name="Tharakan J.M."/>
            <person name="Vosberg H.-P."/>
            <person name="Rajamanickam C."/>
        </authorList>
    </citation>
    <scope>VARIANT CMH1 LEU-712</scope>
</reference>
<reference key="59">
    <citation type="journal article" date="2000" name="Hum. Mutat.">
        <title>Novel cardiac beta-myosin heavy chain gene missense mutations (R869C and R870C) that cause familial hypertrophic cardiomyopathy.</title>
        <authorList>
            <person name="Anan R."/>
            <person name="Shono H."/>
            <person name="Tei C."/>
        </authorList>
    </citation>
    <scope>VARIANTS CMH1 CYS-869 AND CYS-870</scope>
</reference>
<reference key="60">
    <citation type="journal article" date="2000" name="J. Mol. Cell. Cardiol.">
        <title>Malignant hypertrophic cardiomyopathy caused by the Arg723Gly mutation in beta-myosin heavy chain gene.</title>
        <authorList>
            <person name="Enjuto M."/>
            <person name="Francino A."/>
            <person name="Navarro-Lopez F."/>
            <person name="Viles D."/>
            <person name="Pare J.-C."/>
            <person name="Ballesta A.M."/>
        </authorList>
    </citation>
    <scope>VARIANT CMH1 GLY-723</scope>
</reference>
<reference key="61">
    <citation type="journal article" date="2000" name="N. Engl. J. Med.">
        <title>Mutations in sarcomere protein genes as a cause of dilated cardiomyopathy.</title>
        <authorList>
            <person name="Kamisago M."/>
            <person name="Sharma S.D."/>
            <person name="DePalma S.R."/>
            <person name="Solomon S."/>
            <person name="Sharma P."/>
            <person name="McDonough B."/>
            <person name="Smoot L."/>
            <person name="Mullen M.P."/>
            <person name="Woolf P.K."/>
            <person name="Wigle E.D."/>
            <person name="Seidman J.G."/>
            <person name="Seidman C.E."/>
        </authorList>
    </citation>
    <scope>VARIANTS CMD1S PRO-532 AND LEU-764</scope>
</reference>
<reference key="62">
    <citation type="journal article" date="2000" name="Scand. Cardiovasc. J.">
        <title>A novel missense mutation, Leu390Val, in the cardiac beta-myosin heavy chain associated with pronounced septal hypertrophy in two families with hypertrophic cardiomyopathy.</title>
        <authorList>
            <person name="Havndrup O."/>
            <person name="Bundgaard H."/>
            <person name="Andersen P.S."/>
            <person name="Larsen L.A."/>
            <person name="Vuust J."/>
            <person name="Kjeldsen K."/>
            <person name="Christiansen M."/>
        </authorList>
    </citation>
    <scope>VARIANT CMH1 VAL-390</scope>
</reference>
<reference key="63">
    <citation type="journal article" date="2001" name="Cell">
        <title>The overall pattern of cardiac contraction depends on a spatial gradient of myosin regulatory light chain phosphorylation.</title>
        <authorList>
            <person name="Davis J.S."/>
            <person name="Hassanzadeh S."/>
            <person name="Winitsky S."/>
            <person name="Lin H."/>
            <person name="Satorius C."/>
            <person name="Vemuri R."/>
            <person name="Aletras A.H."/>
            <person name="Wen H."/>
            <person name="Epstein N.D."/>
        </authorList>
    </citation>
    <scope>VARIANT CMH1 ASP-743</scope>
</reference>
<reference key="64">
    <citation type="journal article" date="2001" name="J. Med. Genet.">
        <title>Mutations in cis can confound genotype-phenotype correlations in hypertrophic cardiomyopathy.</title>
        <authorList>
            <person name="Blair E."/>
            <person name="Price S.J."/>
            <person name="Baty C.J."/>
            <person name="Oestman-Smith I."/>
            <person name="Watkins H."/>
        </authorList>
    </citation>
    <scope>VARIANT CMH1 VAL-728</scope>
</reference>
<reference key="65">
    <citation type="journal article" date="2001" name="J. Mol. Cell. Cardiol.">
        <title>Beta-myosin heavy chain gene mutations and hypertrophic cardiomyopathy in Austrian children.</title>
        <authorList>
            <person name="Greber-Platzer S."/>
            <person name="Marx M."/>
            <person name="Fleischmann C."/>
            <person name="Suppan C."/>
            <person name="Dobner M."/>
            <person name="Wimmer M."/>
        </authorList>
    </citation>
    <scope>VARIANTS CMH1 GLN-249; MET-406; CYS-453; MET-606; HIS-663 AND LYS-877</scope>
</reference>
<reference key="66">
    <citation type="journal article" date="2002" name="Biochem. Biophys. Res. Commun.">
        <title>Novel mutations in sarcomeric protein genes in dilated cardiomyopathy.</title>
        <authorList>
            <person name="Daehmlow S."/>
            <person name="Erdmann J."/>
            <person name="Knueppel T."/>
            <person name="Gille C."/>
            <person name="Froemmel C."/>
            <person name="Hummel M."/>
            <person name="Hetzer R."/>
            <person name="Regitz-Zagrosek V."/>
        </authorList>
    </citation>
    <scope>VARIANTS CMD1S THR-223 AND LEU-642</scope>
</reference>
<reference key="67">
    <citation type="journal article" date="2002" name="Circulation">
        <title>Assessment of diastolic function with Doppler tissue imaging to predict genotype in preclinical hypertrophic cardiomyopathy.</title>
        <authorList>
            <person name="Ho C.Y."/>
            <person name="Sweitzer N.K."/>
            <person name="McDonough B."/>
            <person name="Maron B.J."/>
            <person name="Casey S.A."/>
            <person name="Seidman J.G."/>
            <person name="Seidman C.E."/>
            <person name="Solomon S.D."/>
        </authorList>
    </citation>
    <scope>VARIANTS CMH1 HIS-663; TRP-719; ARG-768 AND GLY-906</scope>
</reference>
<reference key="68">
    <citation type="journal article" date="2002" name="Circ. Res.">
        <title>Mutations of the light meromyosin domain of the beta-myosin heavy chain rod in hypertrophic cardiomyopathy.</title>
        <authorList>
            <person name="Blair E."/>
            <person name="Redwood C."/>
            <person name="de Jesus Oliveira M."/>
            <person name="Moolman-Smook J.C."/>
            <person name="Brink P."/>
            <person name="Corfield V.A."/>
            <person name="Oestman-Smith I."/>
            <person name="Watkins H."/>
        </authorList>
    </citation>
    <scope>VARIANTS CMH1 THR-1379 AND GLY-1776</scope>
    <scope>VARIANT CYS-1491</scope>
</reference>
<reference key="69">
    <citation type="journal article" date="2002" name="Hum. Mutat.">
        <title>Low-density DNA microarrays are versatile tools to screen for known mutations in hypertrophic cardiomyopathy.</title>
        <authorList>
            <person name="Waldmueller S."/>
            <person name="Freund P."/>
            <person name="Mauch S."/>
            <person name="Toder R."/>
            <person name="Vosberg H.-P."/>
        </authorList>
    </citation>
    <scope>VARIANTS CMH1 GLN-249; THR-349; GLN-403; ARG-595; MET-606; GLN-719; TRP-719; GLU-927 DEL AND LYS-1555</scope>
</reference>
<reference key="70">
    <citation type="journal article" date="2003" name="Ann. Neurol.">
        <title>Myosin storage myopathy associated with a heterozygous missense mutation in MYH7.</title>
        <authorList>
            <person name="Tajsharghi H."/>
            <person name="Thornell L.-E."/>
            <person name="Lindberg C."/>
            <person name="Lindvall B."/>
            <person name="Henriksson K.-G."/>
            <person name="Oldfors A."/>
        </authorList>
    </citation>
    <scope>VARIANT CMYO7A TRP-1845</scope>
</reference>
<reference key="71">
    <citation type="journal article" date="2003" name="Biochem. Biophys. Res. Commun.">
        <title>Hypertrophic cardiomyopathy: two homozygous cases with 'typical' hypertrophic cardiomyopathy and three new mutations in cases with progression to dilated cardiomyopathy.</title>
        <authorList>
            <person name="Nanni L."/>
            <person name="Pieroni M."/>
            <person name="Chimenti C."/>
            <person name="Simionati B."/>
            <person name="Zimbello R."/>
            <person name="Maseri A."/>
            <person name="Frustaci A."/>
            <person name="Lanfranchi G."/>
        </authorList>
    </citation>
    <scope>VARIANTS CMH1 CYS-453; MET-517 AND GLU-734</scope>
</reference>
<reference key="72">
    <citation type="journal article" date="2003" name="Cardiovasc. Res.">
        <title>Outcome of clinical versus genetic family screening in hypertrophic cardiomyopathy with focus on cardiac beta-myosin gene mutations.</title>
        <authorList>
            <person name="Havndrup O."/>
            <person name="Bundgaard H."/>
            <person name="Andersen P.S."/>
            <person name="Larsen L.A."/>
            <person name="Vuust J."/>
            <person name="Kjeldsen K."/>
            <person name="Christiansen M."/>
        </authorList>
    </citation>
    <scope>VARIANTS CMH1 THR-190; MET-320; VAL-390; VAL-601; MET-606; CYS-694; GLU-778 AND GLN-846</scope>
</reference>
<reference key="73">
    <citation type="journal article" date="2003" name="Circulation">
        <title>Hypertrophic cardiomyopathy: distribution of disease genes, spectrum of mutations, and implications for a molecular diagnosis strategy.</title>
        <authorList>
            <person name="Richard P."/>
            <person name="Charron P."/>
            <person name="Carrier L."/>
            <person name="Ledeuil C."/>
            <person name="Cheav T."/>
            <person name="Pichereau C."/>
            <person name="Benaiche A."/>
            <person name="Isnard R."/>
            <person name="Dubourg O."/>
            <person name="Burban M."/>
            <person name="Gueffet J.-P."/>
            <person name="Millaire A."/>
            <person name="Desnos M."/>
            <person name="Schwartz K."/>
            <person name="Hainque B."/>
            <person name="Komajda M."/>
        </authorList>
    </citation>
    <scope>VARIANTS CMH1 MET-39; ASN-188; HIS-204; SER-232; GLN-249; THR-263; THR-355; LEU-403; GLN-403; TRP-403; VAL-428; THR-443; CYS-453; SER-479; LYS-483; MET-606; ILE-659; SER-663; HIS-663; CYS-671; ARG-716; GLN-719; TRP-719; CYS-723; GLU-733; ARG-741; ARG-768; GLU-778; HIS-787; THR-852; GLY-869; GLU-883 DEL; GLU-930 DEL; ARG-1135; GLN-1218; MET-1377; THR-1379; TRP-1382; MET-1692 AND THR-1777</scope>
</reference>
<reference key="74">
    <citation type="journal article" date="2004" name="Circulation">
        <authorList>
            <person name="Richard P."/>
            <person name="Charron P."/>
            <person name="Carrier L."/>
            <person name="Ledeuil C."/>
            <person name="Cheav T."/>
            <person name="Pichereau C."/>
            <person name="Benaiche A."/>
            <person name="Isnard R."/>
            <person name="Dubourg O."/>
            <person name="Burban M."/>
            <person name="Gueffet J.-P."/>
            <person name="Millaire A."/>
            <person name="Desnos M."/>
            <person name="Schwartz K."/>
            <person name="Hainque B."/>
            <person name="Komajda M."/>
        </authorList>
    </citation>
    <scope>ERRATUM OF PUBMED:12707239</scope>
</reference>
<reference key="75">
    <citation type="journal article" date="2003" name="Clin. Genet.">
        <title>Mutation spectrum in a large cohort of unrelated consecutive patients with hypertrophic cardiomyopathy.</title>
        <authorList>
            <person name="Erdmann J."/>
            <person name="Daehmlow S."/>
            <person name="Wischke S."/>
            <person name="Senyuva M."/>
            <person name="Werner U."/>
            <person name="Raible J."/>
            <person name="Tanis N."/>
            <person name="Dyachenko S."/>
            <person name="Hummel M."/>
            <person name="Hetzer R."/>
            <person name="Regitz-Zagrosek V."/>
        </authorList>
    </citation>
    <scope>VARIANTS CMH1 TRP-143; TRP-403; ILE-411; SER-584; HIS-694; TRP-719; THR-736; PHE-796; ILE-824; HIS-870; PHE-905; GLN-924 AND ASN-928</scope>
</reference>
<reference key="76">
    <citation type="journal article" date="2003" name="Genet. Test.">
        <title>Utility of genetic screening in hypertrophic cardiomyopathy: prevalence and significance of novel and double (homozygous and heterozygous) beta-myosin mutations.</title>
        <authorList>
            <person name="Mohiddin S.A."/>
            <person name="Begley D.A."/>
            <person name="McLam E."/>
            <person name="Cardoso J.-P."/>
            <person name="Winkler J.B."/>
            <person name="Sellers J.R."/>
            <person name="Fananapazir L."/>
        </authorList>
    </citation>
    <scope>VARIANTS CMH1 GLY-143; ILE-148; GLN-207; LEU-211; GLU-351; GLN-403; SER-479; ALA-500; ARG-571; HIS-663; CYS-671; THR-736; GLY-763; ASN-782; LEU-822; GLU-882 AND VAL-908</scope>
</reference>
<reference key="77">
    <citation type="journal article" date="2003" name="Heart">
        <title>Mutations of the beta myosin heavy chain gene in hypertrophic cardiomyopathy: critical functional sites determine prognosis.</title>
        <authorList>
            <person name="Woo A."/>
            <person name="Rakowski H."/>
            <person name="Liew J.C."/>
            <person name="Zhao M.-S."/>
            <person name="Liew C.-C."/>
            <person name="Parker T.G."/>
            <person name="Zeller M."/>
            <person name="Wigle E.D."/>
            <person name="Sole M.J."/>
        </authorList>
    </citation>
    <scope>VARIANTS CMH1 THR-196; LEU-211; GLN-249; GLN-403; LEU-404; ILE-411; CYS-453; ARG-716; CYS-870; VAL-908 AND LYS-930</scope>
</reference>
<reference key="78">
    <citation type="journal article" date="2003" name="J. Appl. Genet.">
        <title>Three novel mutations in exon 21 encoding beta-cardiac myosin heavy chain.</title>
        <authorList>
            <person name="Moric E."/>
            <person name="Mazurek U."/>
            <person name="Polonska J."/>
            <person name="Domal-Kwiatkowska D."/>
            <person name="Smolik S."/>
            <person name="Kozakiewicz K."/>
            <person name="Tendera M."/>
            <person name="Wilczok T."/>
        </authorList>
    </citation>
    <scope>VARIANTS CMH1 VAL-774 AND ASN-782</scope>
</reference>
<reference key="79">
    <citation type="journal article" date="2003" name="J. Mol. Cell. Cardiol.">
        <title>Identification of the genotypes causing hypertrophic cardiomyopathy in northern Sweden.</title>
        <authorList>
            <person name="Moerner S."/>
            <person name="Richard P."/>
            <person name="Kazzam E."/>
            <person name="Hellman U."/>
            <person name="Hainque B."/>
            <person name="Schwartz K."/>
            <person name="Waldenstroem A."/>
        </authorList>
    </citation>
    <scope>VARIANTS CMH1 GLU-430 AND LYS-924</scope>
</reference>
<reference key="80">
    <citation type="unpublished observations" date="2004-10">
        <authorList>
            <person name="Richard P."/>
        </authorList>
    </citation>
    <scope>LACK OF ASSOCIATION OF VARIANT MET-1692 WITH HYPERTROPHIC CARDIOMYOPATHY</scope>
</reference>
<reference key="81">
    <citation type="journal article" date="2004" name="Am. J. Hum. Genet.">
        <title>Mutations in the slow skeletal muscle fiber myosin heavy chain gene (MYH7) cause Laing early-onset distal myopathy (MPD1).</title>
        <authorList>
            <person name="Meredith C."/>
            <person name="Herrmann R."/>
            <person name="Parry C."/>
            <person name="Liyanage K."/>
            <person name="Dye D.E."/>
            <person name="Durling H.J."/>
            <person name="Duff R.M."/>
            <person name="Beckman K."/>
            <person name="de Visser M."/>
            <person name="van der Graaff M.M."/>
            <person name="Hedera P."/>
            <person name="Fink J.K."/>
            <person name="Petty E.M."/>
            <person name="Lamont P."/>
            <person name="Fabian V."/>
            <person name="Bridges L."/>
            <person name="Voit T."/>
            <person name="Mastaglia F.L."/>
            <person name="Laing N.G."/>
        </authorList>
    </citation>
    <scope>VARIANTS MPD1 PRO-1500; LYS-1617 DEL; PRO-1663; PRO-1706 AND LYS-1729 DEL</scope>
</reference>
<reference key="82">
    <citation type="journal article" date="2004" name="J. Am. Coll. Cardiol.">
        <title>Comprehensive analysis of the beta-myosin heavy chain gene in 389 unrelated patients with hypertrophic cardiomyopathy.</title>
        <authorList>
            <person name="Van Driest S.L."/>
            <person name="Jaeger M.A."/>
            <person name="Ommen S.R."/>
            <person name="Will M.L."/>
            <person name="Gersh B.J."/>
            <person name="Tajik A.J."/>
            <person name="Ackerman M.J."/>
        </authorList>
    </citation>
    <scope>VARIANTS CMH1 HIS-115; GLN-143; MET-263; CYS-312; THR-349; VAL-385; GLN-403; MET-404; VAL-407; VAL-428; MET-440; CYS-453; THR-511; ARG-515; CYS-663; HIS-663; CYS-694; ARG-716; GLN-719; ARG-741; VAL-778; THR-797; LYS-847 DEL; CYS-858; HIS-869; GLY-894; VAL-908; LYS-921; LYS-924; LYS-931; HIS-953; SER-1057; LYS-1356; MET-1377; TRP-1420; ASN-1459; SER-1513; LYS-1768; MET-1854 AND MET-1929</scope>
    <scope>VARIANTS CYS-1491 AND ASN-1919</scope>
</reference>
<reference key="83">
    <citation type="journal article" date="2004" name="Neurology">
        <title>Mutation of the slow myosin heavy chain rod domain underlies hyaline body myopathy.</title>
        <authorList>
            <person name="Bohlega S."/>
            <person name="Abu-Amero S.N."/>
            <person name="Wakil S.M."/>
            <person name="Carroll P."/>
            <person name="Al-Amr R."/>
            <person name="Lach B."/>
            <person name="Al-Sayed Y."/>
            <person name="Cupler E.J."/>
            <person name="Meyer B.F."/>
        </authorList>
    </citation>
    <scope>VARIANT CMYO7A LEU-1901</scope>
</reference>
<reference key="84">
    <citation type="journal article" date="2005" name="Clin. Chim. Acta">
        <title>Mutations profile in Chinese patients with hypertrophic cardiomyopathy.</title>
        <authorList>
            <person name="Song L."/>
            <person name="Zou Y."/>
            <person name="Wang J."/>
            <person name="Wang Z."/>
            <person name="Zhen Y."/>
            <person name="Lou K."/>
            <person name="Zhang Q."/>
            <person name="Wang X."/>
            <person name="Wang H."/>
            <person name="Li J."/>
            <person name="Hui R."/>
        </authorList>
    </citation>
    <scope>VARIANTS CMH1 VAL-26; GLN-143; ARG-425; THR-450; PHE-511; GLN-615; CYS-663; HIS-663; PRO-734; ARG-741; THR-822; GLU-823; HIS-858; LYS-924 AND LYS-930</scope>
</reference>
<reference key="85">
    <citation type="journal article" date="2005" name="Eur. Heart J.">
        <title>Mutation screening in dilated cardiomyopathy: prominent role of the beta myosin heavy chain gene.</title>
        <authorList>
            <person name="Villard E."/>
            <person name="Duboscq-Bidot L."/>
            <person name="Charron P."/>
            <person name="Benaiche A."/>
            <person name="Conraads V."/>
            <person name="Sylvius N."/>
            <person name="Komajda M."/>
        </authorList>
    </citation>
    <scope>VARIANTS CMD1S THR-201; ASN-412; VAL-550; ASN-1019; SER-1193; LYS-1426 AND CYS-1634</scope>
    <scope>VARIANT CYS-1491</scope>
</reference>
<reference key="86">
    <citation type="journal article" date="2005" name="Eur. J. Hum. Genet.">
        <title>One third of Danish hypertrophic cardiomyopathy patients with MYH7 mutations have mutations in MYH7 rod region.</title>
        <authorList>
            <person name="Hougs L."/>
            <person name="Havndrup O."/>
            <person name="Bundgaard H."/>
            <person name="Koeber L."/>
            <person name="Vuust J."/>
            <person name="Larsen L.A."/>
            <person name="Christiansen M."/>
            <person name="Andersen P.S."/>
        </authorList>
    </citation>
    <scope>VARIANTS CMH1 LYS-1327; TRP-1712 AND LYS-1753</scope>
    <scope>VARIANTS CYS-1475 AND CYS-1491</scope>
</reference>
<reference key="87">
    <citation type="journal article" date="2005" name="J. Clin. Pathol.">
        <title>Denaturing high performance liquid chromatography: high throughput mutation screening in familial hypertrophic cardiomyopathy and SNP genotyping in motor neurone disease.</title>
        <authorList>
            <person name="Yu B."/>
            <person name="Sawyer N.A."/>
            <person name="Caramins M."/>
            <person name="Yuan Z.G."/>
            <person name="Saunderson R.B."/>
            <person name="Pamphlett R."/>
            <person name="Richmond D.R."/>
            <person name="Jeremy R.W."/>
            <person name="Trent R.J."/>
        </authorList>
    </citation>
    <scope>VARIANTS CMH1 VAL-227; GLY-328; GLU-351; GLN-403; TRP-403; ILE-411; THR-435; CYS-453; HIS-453; MET-606; CYS-663; GLN-719; TRP-719; HIS-787; GLY-894; VAL-908 AND LYS-927</scope>
    <scope>VARIANT CYS-1519</scope>
</reference>
<reference key="88">
    <citation type="journal article" date="2005" name="J. Med. Genet.">
        <title>Compound and double mutations in patients with hypertrophic cardiomyopathy: implications for genetic testing and counselling.</title>
        <authorList>
            <person name="Ingles J."/>
            <person name="Doolan A."/>
            <person name="Chiu C."/>
            <person name="Seidman J."/>
            <person name="Seidman C."/>
            <person name="Semsarian C."/>
        </authorList>
    </citation>
    <scope>VARIANTS CMH1 ASN-146; LEU-186; MET-606; HIS-663; ALA-698; GLN-719; CYS-723; THR-736; GLU-742 AND ASP-1057</scope>
</reference>
<reference key="89">
    <citation type="journal article" date="2005" name="J. Mol. Med.">
        <title>Prevalence of cardiac beta-myosin heavy chain gene mutations in patients with hypertrophic cardiomyopathy.</title>
        <authorList>
            <person name="Perrot A."/>
            <person name="Schmidt-Traub H."/>
            <person name="Hoffmann B."/>
            <person name="Prager M."/>
            <person name="Bit-Avragim N."/>
            <person name="Rudenko R.I."/>
            <person name="Usupbaeva D.A."/>
            <person name="Kabaeva Z."/>
            <person name="Imanov B."/>
            <person name="Mirrakhimov M.M."/>
            <person name="Dietz R."/>
            <person name="Wycisk A."/>
            <person name="Tendera M."/>
            <person name="Gessner R."/>
            <person name="Osterziel K.J."/>
        </authorList>
    </citation>
    <scope>VARIANTS CMH1 LEU-211; TRP-403; CYS-453; CYS-501; ARG-576; THR-736; TRP-741; GLY-901; ASN-928; LYS-1356 AND THR-1454</scope>
</reference>
<reference key="90">
    <citation type="journal article" date="2006" name="Clin. Genet.">
        <title>Genotype-phenotype correlation of R870H mutation in hypertrophic cardiomyopathy.</title>
        <authorList>
            <person name="Tanjore R.R."/>
            <person name="Sikindlapuram A.D."/>
            <person name="Calambur N."/>
            <person name="Thakkar B."/>
            <person name="Kerkar P.G."/>
            <person name="Nallari P."/>
        </authorList>
    </citation>
    <scope>VARIANT CMH1 HIS-870</scope>
</reference>
<reference key="91">
    <citation type="journal article" date="2006" name="Rev. Esp. Cardiol.">
        <title>Hypertrophic cardiomyopathy: infrequent mutation of the cardiac beta-myosin heavy-chain gene.</title>
        <authorList>
            <person name="Mora R."/>
            <person name="Merino J.L."/>
            <person name="Peinado R."/>
            <person name="Olias F."/>
            <person name="Garcia-Guereta L."/>
            <person name="del Cerro M.J."/>
            <person name="Tarin M.N."/>
            <person name="Molano J."/>
        </authorList>
    </citation>
    <scope>VARIANTS CMH1 VAL-515 AND CYS-858</scope>
</reference>
<reference key="92">
    <citation type="journal article" date="2007" name="Neurology">
        <title>Homozygous mutation in MYH7 in myosin storage myopathy and cardiomyopathy.</title>
        <authorList>
            <person name="Tajsharghi H."/>
            <person name="Oldfors A."/>
            <person name="Macleod D.P."/>
            <person name="Swash M."/>
        </authorList>
    </citation>
    <scope>VARIANT CMH1 LYS-1883</scope>
</reference>
<reference key="93">
    <citation type="journal article" date="2007" name="Neurology">
        <title>New skeletal myopathy and cardiomyopathy associated with a missense mutation in MYH7.</title>
        <authorList>
            <person name="Darin N."/>
            <person name="Tajsharghi H."/>
            <person name="Oestman-Smith I."/>
            <person name="Gilljam T."/>
            <person name="Oldfors A."/>
        </authorList>
    </citation>
    <scope>VARIANT MPD1 MET-441</scope>
</reference>
<reference key="94">
    <citation type="journal article" date="2007" name="Neuromuscul. Disord.">
        <title>MYH7 gene mutation in myosin storage myopathy and scapulo-peroneal myopathy.</title>
        <authorList>
            <person name="Pegoraro E."/>
            <person name="Gavassini B.F."/>
            <person name="Borsato C."/>
            <person name="Melacini P."/>
            <person name="Vianello A."/>
            <person name="Stramare R."/>
            <person name="Cenacchi G."/>
            <person name="Angelini C."/>
        </authorList>
    </citation>
    <scope>VARIANT CMYO7A TRP-1845</scope>
</reference>
<reference key="95">
    <citation type="journal article" date="2008" name="N. Engl. J. Med.">
        <title>Shared genetic causes of cardiac hypertrophy in children and adults.</title>
        <authorList>
            <person name="Morita H."/>
            <person name="Rehm H.L."/>
            <person name="Menesses A."/>
            <person name="McDonough B."/>
            <person name="Roberts A.E."/>
            <person name="Kucherlapati R."/>
            <person name="Towbin J.A."/>
            <person name="Seidman J.G."/>
            <person name="Seidman C.E."/>
        </authorList>
    </citation>
    <scope>VARIANTS CMH1 ASN-146; MET-606; HIS-663; GLN-719; MET-763; CYS-787; VAL-908; LYS-924 AND MET-1414</scope>
</reference>
<reference key="96">
    <citation type="journal article" date="2011" name="Eur. J. Med. Genet.">
        <title>Clinical and mutational spectrum in a cohort of 105 unrelated patients with dilated cardiomyopathy.</title>
        <authorList>
            <person name="Millat G."/>
            <person name="Bouvagnet P."/>
            <person name="Chevalier P."/>
            <person name="Sebbag L."/>
            <person name="Dulac A."/>
            <person name="Dauphin C."/>
            <person name="Jouk P.S."/>
            <person name="Delrue M.A."/>
            <person name="Thambo J.B."/>
            <person name="Le Metayer P."/>
            <person name="Seronde M.F."/>
            <person name="Faivre L."/>
            <person name="Eicher J.C."/>
            <person name="Rousson R."/>
        </authorList>
    </citation>
    <scope>VARIANTS CMD1S 1101-GLY--LEU-1104 DEL; ALA-1044; GLU-1263 AND VAL-1297</scope>
</reference>
<reference key="97">
    <citation type="journal article" date="2014" name="Pediatr. Cardiol.">
        <title>Hypertrophic cardiomyopathy: a new mutation illustrates the need for family-centered care.</title>
        <authorList>
            <person name="Lee D.D."/>
            <person name="Veith R.L."/>
            <person name="Dimmock D.P."/>
            <person name="Samyn M.M."/>
        </authorList>
    </citation>
    <scope>VARIANT CMH1 LYS-1752</scope>
</reference>
<organism>
    <name type="scientific">Homo sapiens</name>
    <name type="common">Human</name>
    <dbReference type="NCBI Taxonomy" id="9606"/>
    <lineage>
        <taxon>Eukaryota</taxon>
        <taxon>Metazoa</taxon>
        <taxon>Chordata</taxon>
        <taxon>Craniata</taxon>
        <taxon>Vertebrata</taxon>
        <taxon>Euteleostomi</taxon>
        <taxon>Mammalia</taxon>
        <taxon>Eutheria</taxon>
        <taxon>Euarchontoglires</taxon>
        <taxon>Primates</taxon>
        <taxon>Haplorrhini</taxon>
        <taxon>Catarrhini</taxon>
        <taxon>Hominidae</taxon>
        <taxon>Homo</taxon>
    </lineage>
</organism>
<comment type="function">
    <text evidence="89 90">Myosins are actin-based motor molecules with ATPase activity essential for muscle contraction. Forms regular bipolar thick filaments that, together with actin thin filaments, constitute the fundamental contractile unit of skeletal and cardiac muscle.</text>
</comment>
<comment type="subunit">
    <text evidence="58 59">Muscle myosin is a hexameric protein that consists of 2 heavy chain subunits (MHC), 2 alkali light chain subunits (MLC) and 2 regulatory light chain subunits (MLC-2). Interacts with ECPAS (PubMed:20682791). Interacts (via C-terminus) with LRRC39 (PubMed:20847312).</text>
</comment>
<comment type="interaction">
    <interactant intactId="EBI-519141">
        <id>P12883</id>
    </interactant>
    <interactant intactId="EBI-12357161">
        <id>Q5SYC1</id>
        <label>CLVS2</label>
    </interactant>
    <organismsDiffer>false</organismsDiffer>
    <experiments>3</experiments>
</comment>
<comment type="interaction">
    <interactant intactId="EBI-519141">
        <id>P12883</id>
    </interactant>
    <interactant intactId="EBI-739657">
        <id>Q9BQD3</id>
        <label>KXD1</label>
    </interactant>
    <organismsDiffer>false</organismsDiffer>
    <experiments>3</experiments>
</comment>
<comment type="interaction">
    <interactant intactId="EBI-519141">
        <id>P12883</id>
    </interactant>
    <interactant intactId="EBI-9539130">
        <id>Q96DD0</id>
        <label>LRRC39</label>
    </interactant>
    <organismsDiffer>false</organismsDiffer>
    <experiments>3</experiments>
</comment>
<comment type="subcellular location">
    <subcellularLocation>
        <location evidence="2">Cytoplasm</location>
        <location evidence="2">Myofibril</location>
    </subcellularLocation>
    <subcellularLocation>
        <location evidence="2">Cytoplasm</location>
        <location evidence="2">Myofibril</location>
        <location evidence="2">Sarcomere</location>
    </subcellularLocation>
    <text evidence="2">Thick filaments of the myofibrils.</text>
</comment>
<comment type="tissue specificity">
    <text evidence="81">Both wild type and variant Gln-403 are detected in skeletal muscle (at protein level).</text>
</comment>
<comment type="domain">
    <text evidence="66 67">The rodlike tail sequence is highly repetitive, showing cycles of a 28-residue repeat pattern composed of 4 heptapeptides, characteristic for alpha-helical coiled coils (PubMed:26150528, PubMed:26573747). Four skip residues (Skip1: Thr-1188, Skip2: Glu-1385, Skip3: Glu-1582 and Skip4: Gly-1807) introduce discontinuities in the coiled-coil heptad repeats. The first three skip residues are structurally comparable and induce a unique local relaxation of the coiled-coil superhelical pitch and the fourth skip residue lies within a highly flexible molecular hinge that is necessary for myosin incorporation in the bare zone of sarcomeres (PubMed:26150528).</text>
</comment>
<comment type="domain">
    <text evidence="88">Limited proteolysis of myosin heavy chain produces 1 light meromyosin (LMM) and 1 heavy meromyosin (HMM). HMM can be further cleaved into 2 globular subfragments (S1) and 1 rod-shaped subfragment (S2).</text>
</comment>
<comment type="disease" evidence="9 10 11 12 13 14 16 17 18 19 20 21 22 23 25 26 27 28 29 30 31 32 33 37 38 39 40 42 43 44 45 46 47 49 50 52 54 55 57 64 69 70 71 72 73 74 75 76 77 78 79 80 82 83 84 85 86 87">
    <disease id="DI-00233">
        <name>Cardiomyopathy, familial hypertrophic, 1</name>
        <acronym>CMH1</acronym>
        <description>A hereditary heart disorder characterized by ventricular hypertrophy, which is usually asymmetric and often involves the interventricular septum. The symptoms include dyspnea, syncope, collapse, palpitations, and chest pain. They can be readily provoked by exercise. The disorder has inter- and intrafamilial variability ranging from benign to malignant forms with high risk of cardiac failure and sudden cardiac death.</description>
        <dbReference type="MIM" id="192600"/>
    </disease>
    <text>The disease is caused by variants affecting the gene represented in this entry.</text>
</comment>
<comment type="disease" evidence="34 35 48 51">
    <disease id="DI-02021">
        <name>Congenital myopathy 7A, myosin storage, autosomal dominant</name>
        <acronym>CMYO7A</acronym>
        <description>A skeletal muscle disorder characterized by prominent axial and proximal weakening, spinal stiffness, severe scoliosis, with or without respiratory and cardiac involvement. The age at symptom onset can range from early childhood to late adulthood, and disease severity ranges from asymptomatic to severe muscular weakness and respiratory insufficiency. Histopathological examination shows variable findings including subsarcolemmal hyaline bodies in type 1 fibers.</description>
        <dbReference type="MIM" id="608358"/>
    </disease>
    <text>The disease is caused by variants affecting the gene represented in this entry.</text>
</comment>
<comment type="disease" evidence="15 24 41 56 60 61">
    <disease id="DI-00224">
        <name>Cardiomyopathy, dilated, 1S</name>
        <acronym>CMD1S</acronym>
        <description>A disorder characterized by ventricular dilation and impaired systolic function, resulting in congestive heart failure and arrhythmia. Patients are at risk of premature death.</description>
        <dbReference type="MIM" id="613426"/>
    </disease>
    <text>The disease is caused by variants affecting the gene represented in this entry.</text>
</comment>
<comment type="disease" evidence="36 53">
    <disease id="DI-01873">
        <name>Myopathy, distal, 1</name>
        <acronym>MPD1</acronym>
        <description>A muscular disorder characterized by early-onset selective weakness of the great toe and ankle dorsiflexors, followed by weakness of the finger extensors. Mild proximal weakness occasionally develops years later after the onset of the disease.</description>
        <dbReference type="MIM" id="160500"/>
    </disease>
    <text>The disease is caused by variants affecting the gene represented in this entry.</text>
</comment>
<comment type="disease" evidence="65">
    <disease id="DI-04466">
        <name>Congenital myopathy 7B, myosin storage, autosomal recessive</name>
        <acronym>CMYO7B</acronym>
        <description>A skeletal muscle disorder characterized by the onset of scapuloperoneal muscle weakness in early childhood or young adulthood. Affected individuals have difficulty walking, steppage gait, and scapular winging due to shoulder girdle involvement. The severity and progression of the disorder is highly variable. Most patients develop respiratory insufficiency and restrictive lung disease. Some develop hypertrophic cardiomyopathy. Histopathological examination shows variable findings including subsarcolemmal hyaline bodies in type 1 fibers.</description>
        <dbReference type="MIM" id="255160"/>
    </disease>
    <text>The disease is caused by variants affecting the gene represented in this entry.</text>
</comment>
<comment type="disease" evidence="56">
    <disease id="DI-05185">
        <name>Left ventricular non-compaction 5</name>
        <acronym>LVNC5</acronym>
        <description>A form of left ventricular non-compaction, a cardiomyopathy due to myocardial morphogenesis arrest and characterized by a hypertrophic left ventricle, a severely thickened 2-layered myocardium, numerous prominent trabeculations, deep intertrabecular recesses, and poor systolic function. Clinical manifestations are variable. Some affected individuals experience no symptoms at all, others develop heart failure. In some cases, left ventricular non-compaction is associated with other congenital heart anomalies. LVNC5 is an autosomal dominant condition.</description>
        <dbReference type="MIM" id="613426"/>
    </disease>
    <text>The disease is caused by variants affecting distinct genetic loci, including the gene represented in this entry.</text>
</comment>
<comment type="miscellaneous">
    <text>The cardiac alpha isoform is a 'fast' ATPase myosin, while the beta isoform is a 'slow' ATPase.</text>
</comment>
<comment type="similarity">
    <text evidence="88">Belongs to the TRAFAC class myosin-kinesin ATPase superfamily. Myosin family.</text>
</comment>
<comment type="caution">
    <text evidence="88">Represents a conventional myosin. This protein should not be confused with the unconventional myosin-7 (MYO7).</text>
</comment>
<feature type="chain" id="PRO_0000123407" description="Myosin-7">
    <location>
        <begin position="1"/>
        <end position="1935"/>
    </location>
</feature>
<feature type="domain" description="Myosin N-terminal SH3-like" evidence="7">
    <location>
        <begin position="32"/>
        <end position="81"/>
    </location>
</feature>
<feature type="domain" description="Myosin motor" evidence="6">
    <location>
        <begin position="85"/>
        <end position="778"/>
    </location>
</feature>
<feature type="domain" description="IQ" evidence="5">
    <location>
        <begin position="781"/>
        <end position="810"/>
    </location>
</feature>
<feature type="region of interest" description="Actin-binding">
    <location>
        <begin position="655"/>
        <end position="677"/>
    </location>
</feature>
<feature type="region of interest" description="Actin-binding">
    <location>
        <begin position="757"/>
        <end position="771"/>
    </location>
</feature>
<feature type="region of interest" description="Disordered" evidence="8">
    <location>
        <begin position="1907"/>
        <end position="1935"/>
    </location>
</feature>
<feature type="coiled-coil region" evidence="4 66 67">
    <location>
        <begin position="839"/>
        <end position="1935"/>
    </location>
</feature>
<feature type="compositionally biased region" description="Basic and acidic residues" evidence="8">
    <location>
        <begin position="1923"/>
        <end position="1935"/>
    </location>
</feature>
<feature type="binding site">
    <location>
        <begin position="178"/>
        <end position="185"/>
    </location>
    <ligand>
        <name>ATP</name>
        <dbReference type="ChEBI" id="CHEBI:30616"/>
    </ligand>
</feature>
<feature type="modified residue" description="N6,N6,N6-trimethyllysine" evidence="4">
    <location>
        <position position="129"/>
    </location>
</feature>
<feature type="modified residue" description="Phosphothreonine" evidence="1">
    <location>
        <position position="378"/>
    </location>
</feature>
<feature type="modified residue" description="Phosphoserine" evidence="1">
    <location>
        <position position="1137"/>
    </location>
</feature>
<feature type="modified residue" description="Phosphoserine" evidence="3">
    <location>
        <position position="1269"/>
    </location>
</feature>
<feature type="modified residue" description="Phosphothreonine" evidence="1">
    <location>
        <position position="1282"/>
    </location>
</feature>
<feature type="modified residue" description="Phosphotyrosine" evidence="1">
    <location>
        <position position="1308"/>
    </location>
</feature>
<feature type="modified residue" description="Phosphothreonine" evidence="1">
    <location>
        <position position="1309"/>
    </location>
</feature>
<feature type="modified residue" description="Phosphoserine" evidence="2">
    <location>
        <position position="1510"/>
    </location>
</feature>
<feature type="modified residue" description="Phosphothreonine" evidence="1">
    <location>
        <position position="1513"/>
    </location>
</feature>
<feature type="sequence variant" id="VAR_029430" description="In dbSNP:rs3729993.">
    <original>D</original>
    <variation>A</variation>
    <location>
        <position position="3"/>
    </location>
</feature>
<feature type="sequence variant" id="VAR_004566" description="In CMH1; benign; dbSNP:rs186964570." evidence="40">
    <original>A</original>
    <variation>V</variation>
    <location>
        <position position="26"/>
    </location>
</feature>
<feature type="sequence variant" id="VAR_019845" description="In CMH1; dbSNP:rs376160714." evidence="27">
    <original>V</original>
    <variation>M</variation>
    <location>
        <position position="39"/>
    </location>
</feature>
<feature type="sequence variant" id="VAR_004567" description="In CMH1; dbSNP:rs771132107." evidence="82">
    <original>V</original>
    <variation>I</variation>
    <location>
        <position position="59"/>
    </location>
</feature>
<feature type="sequence variant" id="VAR_017745" description="In dbSNP:rs2754166." evidence="63 68">
    <original>D</original>
    <variation>E</variation>
    <location>
        <position position="107"/>
    </location>
</feature>
<feature type="sequence variant" id="VAR_042762" description="In CMH1; uncertain significance; dbSNP:rs397516183." evidence="37">
    <original>Y</original>
    <variation>H</variation>
    <location>
        <position position="115"/>
    </location>
</feature>
<feature type="sequence variant" id="VAR_020797" description="In CMH1; dbSNP:rs1184284157." evidence="70">
    <original>T</original>
    <variation>I</variation>
    <location>
        <position position="124"/>
    </location>
</feature>
<feature type="sequence variant" id="VAR_042763" description="In CMH1; dbSNP:rs727503278." evidence="29">
    <original>R</original>
    <variation>G</variation>
    <location>
        <position position="143"/>
    </location>
</feature>
<feature type="sequence variant" id="VAR_004568" description="In CMH1; dbSNP:rs397516209." evidence="37 40">
    <original>R</original>
    <variation>Q</variation>
    <location>
        <position position="143"/>
    </location>
</feature>
<feature type="sequence variant" id="VAR_029431" description="In CMH1; dbSNP:rs727503278." evidence="31">
    <original>R</original>
    <variation>W</variation>
    <location>
        <position position="143"/>
    </location>
</feature>
<feature type="sequence variant" id="VAR_042764" description="In CMH1; dbSNP:rs397516212." evidence="44 55">
    <original>K</original>
    <variation>N</variation>
    <location>
        <position position="146"/>
    </location>
</feature>
<feature type="sequence variant" id="VAR_042765" description="In CMH1; dbSNP:rs772691929." evidence="29">
    <original>S</original>
    <variation>I</variation>
    <location>
        <position position="148"/>
    </location>
</feature>
<feature type="sequence variant" id="VAR_020798" description="In CMH1; dbSNP:rs1057517771." evidence="70">
    <original>Y</original>
    <variation>C</variation>
    <location>
        <position position="162"/>
    </location>
</feature>
<feature type="sequence variant" id="VAR_042766" description="In CMH1; dbSNP:rs786205906." evidence="44">
    <original>V</original>
    <variation>L</variation>
    <location>
        <position position="186"/>
    </location>
</feature>
<feature type="sequence variant" id="VAR_020799" description="In CMH1; dbSNP:rs1057517772." evidence="70">
    <original>N</original>
    <variation>K</variation>
    <location>
        <position position="187"/>
    </location>
</feature>
<feature type="sequence variant" id="VAR_019846" description="In CMH1; dbSNP:rs730880844." evidence="27">
    <original>T</original>
    <variation>N</variation>
    <location>
        <position position="188"/>
    </location>
</feature>
<feature type="sequence variant" id="VAR_020800" description="In CMH1; dbSNP:rs1159921588." evidence="10 25">
    <original>R</original>
    <variation>T</variation>
    <location>
        <position position="190"/>
    </location>
</feature>
<feature type="sequence variant" id="VAR_042767" description="In CMH1; dbSNP:rs1250974235." evidence="32">
    <original>A</original>
    <variation>T</variation>
    <location>
        <position position="196"/>
    </location>
</feature>
<feature type="sequence variant" id="VAR_042768" description="In CMD1S; dbSNP:rs397516258." evidence="41">
    <original>I</original>
    <variation>T</variation>
    <location>
        <position position="201"/>
    </location>
</feature>
<feature type="sequence variant" id="VAR_019847" description="In CMH1; dbSNP:rs397516260." evidence="27">
    <original>R</original>
    <variation>H</variation>
    <location>
        <position position="204"/>
    </location>
</feature>
<feature type="sequence variant" id="VAR_042769" description="In CMH1; dbSNP:rs727504273." evidence="29">
    <original>K</original>
    <variation>Q</variation>
    <location>
        <position position="207"/>
    </location>
</feature>
<feature type="sequence variant" id="VAR_042770" description="In CMH1; dbSNP:rs727503277." evidence="29 32 42">
    <original>P</original>
    <variation>L</variation>
    <location>
        <position position="211"/>
    </location>
</feature>
<feature type="sequence variant" id="VAR_020801" description="In CMH1; dbSNP:rs1060501445." evidence="70">
    <original>Q</original>
    <variation>K</variation>
    <location>
        <position position="222"/>
    </location>
</feature>
<feature type="sequence variant" id="VAR_017746" description="In CMD1S; dbSNP:rs121913645." evidence="24">
    <original>A</original>
    <variation>T</variation>
    <location>
        <position position="223"/>
    </location>
</feature>
<feature type="sequence variant" id="VAR_042771" description="In CMH1; dbSNP:rs1230432463." evidence="43">
    <original>L</original>
    <variation>V</variation>
    <location>
        <position position="227"/>
    </location>
</feature>
<feature type="sequence variant" id="VAR_019848" description="In CMH1; dbSNP:rs1302598456." evidence="27">
    <original>N</original>
    <variation>S</variation>
    <location>
        <position position="232"/>
    </location>
</feature>
<feature type="sequence variant" id="VAR_073875" description="In LVNC5." evidence="56">
    <location>
        <position position="239"/>
    </location>
</feature>
<feature type="sequence variant" id="VAR_073876" description="In CMH1 and LVNC5; uncertain significance; dbSNP:rs267606910." evidence="45 56">
    <original>R</original>
    <variation>H</variation>
    <location>
        <position position="243"/>
    </location>
</feature>
<feature type="sequence variant" id="VAR_020802" description="In CMH1; dbSNP:rs730880849." evidence="70">
    <original>F</original>
    <variation>L</variation>
    <location>
        <position position="244"/>
    </location>
</feature>
<feature type="sequence variant" id="VAR_004569" description="In CMH1; dbSNP:rs3218713." evidence="9 17 22 27 32 39">
    <original>R</original>
    <variation>Q</variation>
    <location>
        <position position="249"/>
    </location>
</feature>
<feature type="sequence variant" id="VAR_080399" description="In LVNC5." evidence="56">
    <original>F</original>
    <variation>L</variation>
    <location>
        <position position="252"/>
    </location>
</feature>
<feature type="sequence variant" id="VAR_004570" description="In CMH1; dbSNP:rs121913633." evidence="80">
    <original>G</original>
    <variation>E</variation>
    <location>
        <position position="256"/>
    </location>
</feature>
<feature type="sequence variant" id="VAR_042772" description="In CMH1; dbSNP:rs730880855." evidence="37">
    <original>I</original>
    <variation>M</variation>
    <location>
        <position position="263"/>
    </location>
</feature>
<feature type="sequence variant" id="VAR_004571" description="In CMH1; dbSNP:rs397516269." evidence="27 87">
    <original>I</original>
    <variation>T</variation>
    <location>
        <position position="263"/>
    </location>
</feature>
<feature type="sequence variant" id="VAR_073877" description="In CMD1S; dbSNP:rs397515482." evidence="60">
    <original>Y</original>
    <variation>D</variation>
    <location>
        <position position="283"/>
    </location>
</feature>
<feature type="sequence variant" id="VAR_042773" description="In CMH1; dbSNP:rs1244223899." evidence="37">
    <original>F</original>
    <variation>C</variation>
    <location>
        <position position="312"/>
    </location>
</feature>
<feature type="sequence variant" id="VAR_020803" description="In CMH1; dbSNP:rs376897125." evidence="25">
    <original>V</original>
    <variation>M</variation>
    <location>
        <position position="320"/>
    </location>
</feature>
<feature type="sequence variant" id="VAR_042774" description="In CMH1; dbSNP:rs1459392243." evidence="43">
    <original>E</original>
    <variation>G</variation>
    <location>
        <position position="328"/>
    </location>
</feature>
<feature type="sequence variant" id="VAR_004572" description="In CMH1; uncertain significance; dbSNP:rs121913640." evidence="22 37 85">
    <original>M</original>
    <variation>T</variation>
    <location>
        <position position="349"/>
    </location>
</feature>
<feature type="sequence variant" id="VAR_073878" description="In CMD1S; dbSNP:rs730880863." evidence="60">
    <original>Y</original>
    <variation>N</variation>
    <location>
        <position position="350"/>
    </location>
</feature>
<feature type="sequence variant" id="VAR_042775" description="In CMH1; dbSNP:rs730880864." evidence="29 43">
    <original>K</original>
    <variation>E</variation>
    <location>
        <position position="351"/>
    </location>
</feature>
<feature type="sequence variant" id="VAR_019849" description="In CMH1; dbSNP:rs397516088." evidence="27">
    <original>A</original>
    <variation>T</variation>
    <location>
        <position position="355"/>
    </location>
</feature>
<feature type="sequence variant" id="VAR_042776" description="In CMH1; dbSNP:rs1378946537." evidence="84">
    <original>K</original>
    <variation>N</variation>
    <location>
        <position position="383"/>
    </location>
</feature>
<feature type="sequence variant" id="VAR_042777" description="In CMH1; dbSNP:rs1275734785." evidence="37">
    <original>A</original>
    <variation>V</variation>
    <location>
        <position position="385"/>
    </location>
</feature>
<feature type="sequence variant" id="VAR_073879" description="In CMD1S." evidence="60">
    <original>L</original>
    <variation>P</variation>
    <location>
        <position position="390"/>
    </location>
</feature>
<feature type="sequence variant" id="VAR_020804" description="In CMH1." evidence="18 25">
    <original>L</original>
    <variation>V</variation>
    <location>
        <position position="390"/>
    </location>
</feature>
<feature type="sequence variant" id="VAR_004573" description="In CMH1; dbSNP:rs121913624." evidence="27 75">
    <original>R</original>
    <variation>L</variation>
    <location>
        <position position="403"/>
    </location>
</feature>
<feature type="sequence variant" id="VAR_004574" description="In CMH1; dbSNP:rs121913624." evidence="22 27 29 32 37 39 43 46 57 74 81">
    <original>R</original>
    <variation>Q</variation>
    <location>
        <position position="403"/>
    </location>
</feature>
<feature type="sequence variant" id="VAR_004575" description="In CMH1; dbSNP:rs3218714." evidence="11 27 31 42 43 75 76">
    <original>R</original>
    <variation>W</variation>
    <location>
        <position position="403"/>
    </location>
</feature>
<feature type="sequence variant" id="VAR_042778" description="In CMH1; dbSNP:rs730880867." evidence="32">
    <original>V</original>
    <variation>L</variation>
    <location>
        <position position="404"/>
    </location>
</feature>
<feature type="sequence variant" id="VAR_042779" description="In CMH1; dbSNP:rs730880867." evidence="37">
    <original>V</original>
    <variation>M</variation>
    <location>
        <position position="404"/>
    </location>
</feature>
<feature type="sequence variant" id="VAR_020805" description="In CMH1; dbSNP:rs1422611896." evidence="17">
    <original>V</original>
    <variation>M</variation>
    <location>
        <position position="406"/>
    </location>
</feature>
<feature type="sequence variant" id="VAR_042780" description="In CMH1; dbSNP:rs397516095." evidence="37">
    <original>G</original>
    <variation>V</variation>
    <location>
        <position position="407"/>
    </location>
</feature>
<feature type="sequence variant" id="VAR_029432" description="In CMH1; dbSNP:rs730880868." evidence="31 32 43">
    <original>V</original>
    <variation>I</variation>
    <location>
        <position position="411"/>
    </location>
</feature>
<feature type="sequence variant" id="VAR_042781" description="In CMD1S; dbSNP:rs1428725625." evidence="41">
    <original>T</original>
    <variation>N</variation>
    <location>
        <position position="412"/>
    </location>
</feature>
<feature type="sequence variant" id="VAR_042782" description="In CMH1; dbSNP:rs397516097." evidence="40">
    <original>G</original>
    <variation>R</variation>
    <location>
        <position position="425"/>
    </location>
</feature>
<feature type="sequence variant" id="VAR_019850" description="In CMH1; dbSNP:rs727503266." evidence="27 37">
    <original>A</original>
    <variation>V</variation>
    <location>
        <position position="428"/>
    </location>
</feature>
<feature type="sequence variant" id="VAR_029433" description="In CMH1; dbSNP:rs1566535170." evidence="28">
    <original>A</original>
    <variation>E</variation>
    <location>
        <position position="430"/>
    </location>
</feature>
<feature type="sequence variant" id="VAR_042783" description="In CMH1; dbSNP:rs1484300349." evidence="43">
    <original>M</original>
    <variation>T</variation>
    <location>
        <position position="435"/>
    </location>
</feature>
<feature type="sequence variant" id="VAR_042784" description="In CMH1; dbSNP:rs397516098." evidence="37">
    <original>V</original>
    <variation>M</variation>
    <location>
        <position position="440"/>
    </location>
</feature>
<feature type="sequence variant" id="VAR_042785" description="In MPD1; uncertain significance; dbSNP:rs121913653." evidence="53">
    <original>T</original>
    <variation>M</variation>
    <location>
        <position position="441"/>
    </location>
</feature>
<feature type="sequence variant" id="VAR_019851" description="In CMH1; dbSNP:rs1234112565." evidence="27">
    <original>I</original>
    <variation>T</variation>
    <location>
        <position position="443"/>
    </location>
</feature>
<feature type="sequence variant" id="VAR_042786" description="In CMH1; dbSNP:rs1403027088." evidence="9">
    <original>K</original>
    <variation>E</variation>
    <location>
        <position position="450"/>
    </location>
</feature>
<feature type="sequence variant" id="VAR_042787" description="In CMH1; dbSNP:rs1352198296." evidence="40">
    <original>K</original>
    <variation>T</variation>
    <location>
        <position position="450"/>
    </location>
</feature>
<feature type="sequence variant" id="VAR_004576" description="In CMH1; dbSNP:rs121913625." evidence="17 27 30 32 37 39 42 43 74 83">
    <original>R</original>
    <variation>C</variation>
    <location>
        <position position="453"/>
    </location>
</feature>
<feature type="sequence variant" id="VAR_042788" description="In CMH1; dbSNP:rs397516101." evidence="43">
    <original>R</original>
    <variation>H</variation>
    <location>
        <position position="453"/>
    </location>
</feature>
<feature type="sequence variant" id="VAR_073880" description="In CMH1; dbSNP:rs121913625." evidence="54">
    <original>R</original>
    <variation>S</variation>
    <location>
        <position position="453"/>
    </location>
</feature>
<feature type="sequence variant" id="VAR_029434" description="In dbSNP:rs4981473.">
    <original>E</original>
    <variation>Q</variation>
    <location>
        <position position="466"/>
    </location>
</feature>
<feature type="sequence variant" id="VAR_019852" description="In CMH1; dbSNP:rs727504236." evidence="27 29">
    <original>N</original>
    <variation>S</variation>
    <location>
        <position position="479"/>
    </location>
</feature>
<feature type="sequence variant" id="VAR_019853" description="In CMH1; dbSNP:rs121913651." evidence="27">
    <original>E</original>
    <variation>K</variation>
    <location>
        <position position="483"/>
    </location>
</feature>
<feature type="sequence variant" id="VAR_073881" description="In CMH1; dbSNP:rs267606911." evidence="45">
    <original>E</original>
    <variation>D</variation>
    <location>
        <position position="497"/>
    </location>
</feature>
<feature type="sequence variant" id="VAR_020806" description="In CMH1; dbSNP:rs3218715." evidence="11">
    <original>E</original>
    <variation>K</variation>
    <location>
        <position position="499"/>
    </location>
</feature>
<feature type="sequence variant" id="VAR_042789" description="In CMH1; dbSNP:rs727504286." evidence="29">
    <original>E</original>
    <variation>A</variation>
    <location>
        <position position="500"/>
    </location>
</feature>
<feature type="sequence variant" id="VAR_042790" description="In CMH1; dbSNP:rs1288878100." evidence="42">
    <original>Y</original>
    <variation>C</variation>
    <location>
        <position position="501"/>
    </location>
</feature>
<feature type="sequence variant" id="VAR_042791" description="In CMH1; dbSNP:rs1333791654." evidence="40">
    <original>I</original>
    <variation>F</variation>
    <location>
        <position position="511"/>
    </location>
</feature>
<feature type="sequence variant" id="VAR_042792" description="In CMH1; dbSNP:rs397516110." evidence="37">
    <original>I</original>
    <variation>T</variation>
    <location>
        <position position="511"/>
    </location>
</feature>
<feature type="sequence variant" id="VAR_004577" description="In CMH1; dbSNP:rs121913636." evidence="77">
    <original>F</original>
    <variation>C</variation>
    <location>
        <position position="513"/>
    </location>
</feature>
<feature type="sequence variant" id="VAR_042793" description="In CMH1; dbSNP:rs863224900." evidence="37">
    <original>M</original>
    <variation>R</variation>
    <location>
        <position position="515"/>
    </location>
</feature>
<feature type="sequence variant" id="VAR_039562" description="In CMH1; infrequent." evidence="49">
    <original>M</original>
    <variation>V</variation>
    <location>
        <position position="515"/>
    </location>
</feature>
<feature type="sequence variant" id="VAR_029435" description="In CMH1; dbSNP:rs727504237." evidence="30">
    <original>L</original>
    <variation>M</variation>
    <location>
        <position position="517"/>
    </location>
</feature>
<feature type="sequence variant" id="VAR_017747" description="In CMD1S; dbSNP:rs121913642." evidence="15">
    <original>S</original>
    <variation>P</variation>
    <location>
        <position position="532"/>
    </location>
</feature>
<feature type="sequence variant" id="VAR_042794" description="In CMD1S; dbSNP:rs1188606962." evidence="41">
    <original>A</original>
    <variation>V</variation>
    <location>
        <position position="550"/>
    </location>
</feature>
<feature type="sequence variant" id="VAR_042795" description="In CMH1; dbSNP:rs730880879." evidence="29">
    <original>G</original>
    <variation>R</variation>
    <location>
        <position position="571"/>
    </location>
</feature>
<feature type="sequence variant" id="VAR_042796" description="In CMH1; dbSNP:rs727504238." evidence="42">
    <original>H</original>
    <variation>R</variation>
    <location>
        <position position="576"/>
    </location>
</feature>
<feature type="sequence variant" id="VAR_004578" description="In CMH1; dbSNP:rs121913626." evidence="74">
    <original>G</original>
    <variation>R</variation>
    <location>
        <position position="584"/>
    </location>
</feature>
<feature type="sequence variant" id="VAR_029436" description="In CMH1; dbSNP:rs121913626." evidence="31">
    <original>G</original>
    <variation>S</variation>
    <location>
        <position position="584"/>
    </location>
</feature>
<feature type="sequence variant" id="VAR_004579" description="In CMH1; dbSNP:rs1285747856." evidence="82">
    <original>D</original>
    <variation>V</variation>
    <location>
        <position position="587"/>
    </location>
</feature>
<feature type="sequence variant" id="VAR_020807" description="In CMH1; dbSNP:rs1381638438." evidence="22">
    <original>Q</original>
    <variation>R</variation>
    <location>
        <position position="595"/>
    </location>
</feature>
<feature type="sequence variant" id="VAR_020808" description="In CMH1; dbSNP:rs1131691685." evidence="25">
    <original>L</original>
    <variation>V</variation>
    <location>
        <position position="601"/>
    </location>
</feature>
<feature type="sequence variant" id="VAR_004580" description="In CMH1; dbSNP:rs730880880." evidence="82">
    <original>N</original>
    <variation>S</variation>
    <location>
        <position position="602"/>
    </location>
</feature>
<feature type="sequence variant" id="VAR_004581" description="In CMH1; in cis with V-728 gives a more severe phenotype; dbSNP:rs121913627." evidence="17 22 25 27 39 43 44 55 74">
    <original>V</original>
    <variation>M</variation>
    <location>
        <position position="606"/>
    </location>
</feature>
<feature type="sequence variant" id="VAR_004582" description="In CMH1; dbSNP:rs1164270609." evidence="33">
    <original>K</original>
    <variation>N</variation>
    <location>
        <position position="615"/>
    </location>
</feature>
<feature type="sequence variant" id="VAR_042797" description="In CMH1." evidence="40">
    <original>K</original>
    <variation>Q</variation>
    <location>
        <position position="615"/>
    </location>
</feature>
<feature type="sequence variant" id="VAR_017748" description="In CMD1S; uncertain significance; dbSNP:rs121913646." evidence="24">
    <original>S</original>
    <variation>L</variation>
    <location>
        <position position="642"/>
    </location>
</feature>
<feature type="sequence variant" id="VAR_019854" description="In CMH1; dbSNP:rs1241603111." evidence="27">
    <original>M</original>
    <variation>I</variation>
    <location>
        <position position="659"/>
    </location>
</feature>
<feature type="sequence variant" id="VAR_042798" description="In CMH1; dbSNP:rs397516127." evidence="37 40 43">
    <original>R</original>
    <variation>C</variation>
    <location>
        <position position="663"/>
    </location>
</feature>
<feature type="sequence variant" id="VAR_019855" description="In CMH1; dbSNP:rs371898076." evidence="17 23 27 29 37 40 44 55 70">
    <original>R</original>
    <variation>H</variation>
    <location>
        <position position="663"/>
    </location>
</feature>
<feature type="sequence variant" id="VAR_019856" description="In CMH1; dbSNP:rs397516127." evidence="27">
    <original>R</original>
    <variation>S</variation>
    <location>
        <position position="663"/>
    </location>
</feature>
<feature type="sequence variant" id="VAR_019857" description="In CMH1; dbSNP:rs727503263." evidence="27 29">
    <original>R</original>
    <variation>C</variation>
    <location>
        <position position="671"/>
    </location>
</feature>
<feature type="sequence variant" id="VAR_020809" description="In CMH1; dbSNP:rs727504240." evidence="12 25 37">
    <original>R</original>
    <variation>C</variation>
    <location>
        <position position="694"/>
    </location>
</feature>
<feature type="sequence variant" id="VAR_029437" description="In CMH1; dbSNP:rs886039030." evidence="31">
    <original>R</original>
    <variation>H</variation>
    <location>
        <position position="694"/>
    </location>
</feature>
<feature type="sequence variant" id="VAR_020810" description="In CMH1; dbSNP:rs730880732." evidence="86">
    <original>N</original>
    <variation>S</variation>
    <location>
        <position position="696"/>
    </location>
</feature>
<feature type="sequence variant" id="VAR_042799" description="In CMH1; dbSNP:rs397516130." evidence="44">
    <original>V</original>
    <variation>A</variation>
    <location>
        <position position="698"/>
    </location>
</feature>
<feature type="sequence variant" id="VAR_020811" description="In CMH1; dbSNP:rs1224554825." evidence="13">
    <original>R</original>
    <variation>L</variation>
    <location>
        <position position="712"/>
    </location>
</feature>
<feature type="sequence variant" id="VAR_004583" description="In CMH1; dbSNP:rs121913638." evidence="27 32 37 77">
    <original>G</original>
    <variation>R</variation>
    <location>
        <position position="716"/>
    </location>
</feature>
<feature type="sequence variant" id="VAR_017749" description="In CMH1; dbSNP:rs121913641." evidence="11 22 27 37 43 44 55 71">
    <original>R</original>
    <variation>Q</variation>
    <location>
        <position position="719"/>
    </location>
</feature>
<feature type="sequence variant" id="VAR_004584" description="In CMH1; dbSNP:rs121913637." evidence="22 23 27 31 43 72 77 85 86 87">
    <original>R</original>
    <variation>W</variation>
    <location>
        <position position="719"/>
    </location>
</feature>
<feature type="sequence variant" id="VAR_004585" description="In CMH1; dbSNP:rs121913630." evidence="27 44 87">
    <original>R</original>
    <variation>C</variation>
    <location>
        <position position="723"/>
    </location>
</feature>
<feature type="sequence variant" id="VAR_020812" description="In CMH1; malignant phenotype; dbSNP:rs121913630." evidence="16">
    <original>R</original>
    <variation>G</variation>
    <location>
        <position position="723"/>
    </location>
</feature>
<feature type="sequence variant" id="VAR_017750" description="In CMH1; in cis with M-606 gives a more severe phenotype; dbSNP:rs121913644." evidence="19">
    <original>A</original>
    <variation>V</variation>
    <location>
        <position position="728"/>
    </location>
</feature>
<feature type="sequence variant" id="VAR_004586" description="In CMH1; dbSNP:rs1247313340." evidence="82">
    <original>P</original>
    <variation>L</variation>
    <location>
        <position position="731"/>
    </location>
</feature>
<feature type="sequence variant" id="VAR_019858" description="In CMH1; dbSNP:rs727504241." evidence="27">
    <original>G</original>
    <variation>E</variation>
    <location>
        <position position="733"/>
    </location>
</feature>
<feature type="sequence variant" id="VAR_029438" description="In CMH1; dbSNP:rs1173617248." evidence="30">
    <original>Q</original>
    <variation>E</variation>
    <location>
        <position position="734"/>
    </location>
</feature>
<feature type="sequence variant" id="VAR_042800" description="In CMH1; dbSNP:rs863225097." evidence="40">
    <original>Q</original>
    <variation>P</variation>
    <location>
        <position position="734"/>
    </location>
</feature>
<feature type="sequence variant" id="VAR_004587" description="In CMH1." evidence="82">
    <original>I</original>
    <variation>M</variation>
    <location>
        <position position="736"/>
    </location>
</feature>
<feature type="sequence variant" id="VAR_029439" description="In CMH1; dbSNP:rs727503261." evidence="29 31 42 44">
    <original>I</original>
    <variation>T</variation>
    <location>
        <position position="736"/>
    </location>
</feature>
<feature type="sequence variant" id="VAR_004588" description="In CMH1; dbSNP:rs121913632." evidence="27 37 40 80">
    <original>G</original>
    <variation>R</variation>
    <location>
        <position position="741"/>
    </location>
</feature>
<feature type="sequence variant" id="VAR_004589" description="In CMH1; dbSNP:rs121913632." evidence="42">
    <original>G</original>
    <variation>W</variation>
    <location>
        <position position="741"/>
    </location>
</feature>
<feature type="sequence variant" id="VAR_042801" description="In CMH1; dbSNP:rs786205907." evidence="44">
    <original>A</original>
    <variation>E</variation>
    <location>
        <position position="742"/>
    </location>
</feature>
<feature type="sequence variant" id="VAR_014199" description="In CMH1; dbSNP:rs397516139." evidence="20">
    <original>E</original>
    <variation>D</variation>
    <location>
        <position position="743"/>
    </location>
</feature>
<feature type="sequence variant" id="VAR_042802" description="In CMH1; dbSNP:rs730880735." evidence="29">
    <original>V</original>
    <variation>G</variation>
    <location>
        <position position="763"/>
    </location>
</feature>
<feature type="sequence variant" id="VAR_045926" description="In CMH1; dbSNP:rs727504253." evidence="55">
    <original>V</original>
    <variation>M</variation>
    <location>
        <position position="763"/>
    </location>
</feature>
<feature type="sequence variant" id="VAR_017751" description="In CMD1S; dbSNP:rs121913643." evidence="15">
    <original>F</original>
    <variation>L</variation>
    <location>
        <position position="764"/>
    </location>
</feature>
<feature type="sequence variant" id="VAR_019859" description="In CMH1; dbSNP:rs727503260." evidence="23 27">
    <original>G</original>
    <variation>R</variation>
    <location>
        <position position="768"/>
    </location>
</feature>
<feature type="sequence variant" id="VAR_042803" description="In CMH1; dbSNP:rs1425960124." evidence="26">
    <original>E</original>
    <variation>V</variation>
    <location>
        <position position="774"/>
    </location>
</feature>
<feature type="sequence variant" id="VAR_019860" description="In CMH1; dbSNP:rs2069544." evidence="25 27">
    <original>D</original>
    <variation>E</variation>
    <location>
        <position position="778"/>
    </location>
</feature>
<feature type="sequence variant" id="VAR_004590" description="In CMH1; dbSNP:rs121913634." evidence="78">
    <original>D</original>
    <variation>G</variation>
    <location>
        <position position="778"/>
    </location>
</feature>
<feature type="sequence variant" id="VAR_042804" description="In CMH1; dbSNP:rs121913634." evidence="37">
    <original>D</original>
    <variation>V</variation>
    <location>
        <position position="778"/>
    </location>
</feature>
<feature type="sequence variant" id="VAR_020813" description="In CMH1; dbSNP:rs886039185." evidence="26 29 70">
    <original>S</original>
    <variation>N</variation>
    <location>
        <position position="782"/>
    </location>
</feature>
<feature type="sequence variant" id="VAR_045927" description="In CMH1; dbSNP:rs145677314." evidence="55">
    <original>R</original>
    <variation>C</variation>
    <location>
        <position position="787"/>
    </location>
</feature>
<feature type="sequence variant" id="VAR_019861" description="In CMH1; likely benign; dbSNP:rs376754645." evidence="27 43">
    <original>R</original>
    <variation>H</variation>
    <location>
        <position position="787"/>
    </location>
</feature>
<feature type="sequence variant" id="VAR_029440" description="In CMH1; dbSNP:rs1222361739." evidence="31">
    <original>L</original>
    <variation>F</variation>
    <location>
        <position position="796"/>
    </location>
</feature>
<feature type="sequence variant" id="VAR_004591" description="In CMH1; dbSNP:rs3218716." evidence="11 37 69">
    <original>A</original>
    <variation>T</variation>
    <location>
        <position position="797"/>
    </location>
</feature>
<feature type="sequence variant" id="VAR_042805" description="In CMH1; dbSNP:rs730880742." evidence="29">
    <original>M</original>
    <variation>L</variation>
    <location>
        <position position="822"/>
    </location>
</feature>
<feature type="sequence variant" id="VAR_042806" description="In CMH1; dbSNP:rs1373092362." evidence="40">
    <original>M</original>
    <variation>T</variation>
    <location>
        <position position="822"/>
    </location>
</feature>
<feature type="sequence variant" id="VAR_042807" description="In CMH1; dbSNP:rs1278076805." evidence="40">
    <original>G</original>
    <variation>E</variation>
    <location>
        <position position="823"/>
    </location>
</feature>
<feature type="sequence variant" id="VAR_029441" description="In CMH1; dbSNP:rs397516149." evidence="31">
    <original>V</original>
    <variation>I</variation>
    <location>
        <position position="824"/>
    </location>
</feature>
<feature type="sequence variant" id="VAR_020814" description="In CMH1; dbSNP:rs730880748." evidence="25">
    <original>E</original>
    <variation>Q</variation>
    <location>
        <position position="846"/>
    </location>
</feature>
<feature type="sequence variant" id="VAR_042808" description="In CMH1; dbSNP:rs397516155." evidence="37">
    <location>
        <position position="847"/>
    </location>
</feature>
<feature type="sequence variant" id="VAR_019862" description="In CMH1; dbSNP:rs397516157." evidence="27">
    <original>M</original>
    <variation>T</variation>
    <location>
        <position position="852"/>
    </location>
</feature>
<feature type="sequence variant" id="VAR_039563" description="In CMH1; infrequent; dbSNP:rs2754158." evidence="37 49">
    <original>R</original>
    <variation>C</variation>
    <location>
        <position position="858"/>
    </location>
</feature>
<feature type="sequence variant" id="VAR_042809" description="In CMH1; dbSNP:rs2856897." evidence="40">
    <original>R</original>
    <variation>H</variation>
    <location>
        <position position="858"/>
    </location>
</feature>
<feature type="sequence variant" id="VAR_020815" description="In CMH1; dbSNP:rs730880750." evidence="14">
    <original>R</original>
    <variation>C</variation>
    <location>
        <position position="869"/>
    </location>
</feature>
<feature type="sequence variant" id="VAR_019863" description="In CMH1; dbSNP:rs730880750." evidence="27">
    <original>R</original>
    <variation>G</variation>
    <location>
        <position position="869"/>
    </location>
</feature>
<feature type="sequence variant" id="VAR_042810" description="In CMH1; dbSNP:rs202141173." evidence="37">
    <original>R</original>
    <variation>H</variation>
    <location>
        <position position="869"/>
    </location>
</feature>
<feature type="sequence variant" id="VAR_020816" description="In CMH1; dbSNP:rs138049878." evidence="14 32">
    <original>R</original>
    <variation>C</variation>
    <location>
        <position position="870"/>
    </location>
</feature>
<feature type="sequence variant" id="VAR_004592" description="In CMH1; dbSNP:rs36211715." evidence="31 47 70">
    <original>R</original>
    <variation>H</variation>
    <location>
        <position position="870"/>
    </location>
</feature>
<feature type="sequence variant" id="VAR_020817" description="In CMH1; dbSNP:rs1282663873." evidence="17">
    <original>M</original>
    <variation>K</variation>
    <location>
        <position position="877"/>
    </location>
</feature>
<feature type="sequence variant" id="VAR_042811" description="In CMH1; dbSNP:rs397516160." evidence="29">
    <original>Q</original>
    <variation>E</variation>
    <location>
        <position position="882"/>
    </location>
</feature>
<feature type="sequence variant" id="VAR_019864" description="In CMH1; dbSNP:rs1314609309." evidence="27">
    <location>
        <position position="883"/>
    </location>
</feature>
<feature type="sequence variant" id="VAR_042812" description="In CMH1; dbSNP:rs397516161." evidence="37 43">
    <original>E</original>
    <variation>G</variation>
    <location>
        <position position="894"/>
    </location>
</feature>
<feature type="sequence variant" id="VAR_042813" description="In CMH1; dbSNP:rs1406848007." evidence="42">
    <original>A</original>
    <variation>G</variation>
    <location>
        <position position="901"/>
    </location>
</feature>
<feature type="sequence variant" id="VAR_029442" description="In CMH1; dbSNP:rs730880757." evidence="31">
    <original>C</original>
    <variation>F</variation>
    <location>
        <position position="905"/>
    </location>
</feature>
<feature type="sequence variant" id="VAR_042814" description="In CMH1; dbSNP:rs267606908." evidence="23 45">
    <original>D</original>
    <variation>G</variation>
    <location>
        <position position="906"/>
    </location>
</feature>
<feature type="sequence variant" id="VAR_004593" description="In CMH1; dbSNP:rs121913631." evidence="29 32 37 43 46 55 79">
    <original>L</original>
    <variation>V</variation>
    <location>
        <position position="908"/>
    </location>
</feature>
<feature type="sequence variant" id="VAR_042815" description="In CMH1; dbSNP:rs730880759." evidence="37">
    <original>E</original>
    <variation>K</variation>
    <location>
        <position position="921"/>
    </location>
</feature>
<feature type="sequence variant" id="VAR_004594" description="In CMH1; dbSNP:rs121913628." evidence="28 37 40 55">
    <original>E</original>
    <variation>K</variation>
    <location>
        <position position="924"/>
    </location>
</feature>
<feature type="sequence variant" id="VAR_029443" description="In CMH1; dbSNP:rs121913628." evidence="31">
    <original>E</original>
    <variation>Q</variation>
    <location>
        <position position="924"/>
    </location>
</feature>
<feature type="sequence variant" id="VAR_042816" description="In CMH1; dbSNP:rs397516170." evidence="43">
    <original>E</original>
    <variation>K</variation>
    <location>
        <position position="927"/>
    </location>
</feature>
<feature type="sequence variant" id="VAR_020818" description="In CMH1." evidence="22">
    <location>
        <position position="927"/>
    </location>
</feature>
<feature type="sequence variant" id="VAR_029444" description="In CMH1; dbSNP:rs727503252." evidence="31 42">
    <original>D</original>
    <variation>N</variation>
    <location>
        <position position="928"/>
    </location>
</feature>
<feature type="sequence variant" id="VAR_004595" description="In CMH1; dbSNP:rs397516171." evidence="32 40">
    <original>E</original>
    <variation>K</variation>
    <location>
        <position position="930"/>
    </location>
</feature>
<feature type="sequence variant" id="VAR_004596" description="In CMH1." evidence="27 87">
    <location>
        <position position="930"/>
    </location>
</feature>
<feature type="sequence variant" id="VAR_042817" description="In CMH1; dbSNP:rs1131691514." evidence="37">
    <original>E</original>
    <variation>K</variation>
    <location>
        <position position="931"/>
    </location>
</feature>
<feature type="sequence variant" id="VAR_004597" description="In CMH1; dbSNP:rs121913639." evidence="73">
    <original>E</original>
    <variation>K</variation>
    <location>
        <position position="935"/>
    </location>
</feature>
<feature type="sequence variant" id="VAR_004598" description="In CMH1; dbSNP:rs121913629." evidence="39">
    <original>E</original>
    <variation>K</variation>
    <location>
        <position position="949"/>
    </location>
</feature>
<feature type="sequence variant" id="VAR_042818" description="In CMH1; dbSNP:rs1391622163." evidence="37">
    <original>D</original>
    <variation>H</variation>
    <location>
        <position position="953"/>
    </location>
</feature>
<feature type="sequence variant" id="VAR_042819" description="In CMD1S; dbSNP:rs755392435." evidence="41">
    <original>T</original>
    <variation>N</variation>
    <location>
        <position position="1019"/>
    </location>
</feature>
<feature type="sequence variant" id="VAR_067260" description="In CMD1S." evidence="61">
    <original>V</original>
    <variation>A</variation>
    <location>
        <position position="1044"/>
    </location>
</feature>
<feature type="sequence variant" id="VAR_042820" description="In CMH1; dbSNP:rs1298412196." evidence="44">
    <original>G</original>
    <variation>D</variation>
    <location>
        <position position="1057"/>
    </location>
</feature>
<feature type="sequence variant" id="VAR_042821" description="In CMH1; dbSNP:rs397516179." evidence="37">
    <original>G</original>
    <variation>S</variation>
    <location>
        <position position="1057"/>
    </location>
</feature>
<feature type="sequence variant" id="VAR_067261" description="In CMD1S." evidence="61">
    <location>
        <begin position="1101"/>
        <end position="1104"/>
    </location>
</feature>
<feature type="sequence variant" id="VAR_017753" description="In dbSNP:rs1041961." evidence="62">
    <original>A</original>
    <variation>S</variation>
    <location>
        <position position="1124"/>
    </location>
</feature>
<feature type="sequence variant" id="VAR_019865" description="In CMH1; dbSNP:rs1195446785." evidence="27">
    <original>L</original>
    <variation>R</variation>
    <location>
        <position position="1135"/>
    </location>
</feature>
<feature type="sequence variant" id="VAR_042822" description="In CMD1S; dbSNP:rs886039090." evidence="41">
    <original>R</original>
    <variation>S</variation>
    <location>
        <position position="1193"/>
    </location>
</feature>
<feature type="sequence variant" id="VAR_019866" description="In CMH1; dbSNP:rs1170782159." evidence="27">
    <original>E</original>
    <variation>Q</variation>
    <location>
        <position position="1218"/>
    </location>
</feature>
<feature type="sequence variant" id="VAR_073882" description="In CMD1S; dbSNP:rs397516190." evidence="60">
    <location>
        <position position="1220"/>
    </location>
</feature>
<feature type="sequence variant" id="VAR_067262" description="In CMD1S; dbSNP:rs758889483." evidence="61">
    <original>A</original>
    <variation>E</variation>
    <location>
        <position position="1263"/>
    </location>
</feature>
<feature type="sequence variant" id="VAR_067263" description="In CMD1S." evidence="61">
    <original>L</original>
    <variation>V</variation>
    <location>
        <position position="1297"/>
    </location>
</feature>
<feature type="sequence variant" id="VAR_042823" description="In CMH1; likely benign; dbSNP:rs141764279." evidence="38">
    <original>N</original>
    <variation>K</variation>
    <location>
        <position position="1327"/>
    </location>
</feature>
<feature type="sequence variant" id="VAR_042824" description="In CMH1; dbSNP:rs727503246." evidence="37 42">
    <original>E</original>
    <variation>K</variation>
    <location>
        <position position="1356"/>
    </location>
</feature>
<feature type="sequence variant" id="VAR_073883" description="In LVNC5; uncertain significance; dbSNP:rs45451303." evidence="56">
    <original>R</original>
    <variation>C</variation>
    <location>
        <position position="1359"/>
    </location>
</feature>
<feature type="sequence variant" id="VAR_019867" description="In CMH1; dbSNP:rs397516201." evidence="27 37">
    <original>T</original>
    <variation>M</variation>
    <location>
        <position position="1377"/>
    </location>
</feature>
<feature type="sequence variant" id="VAR_019868" description="In CMH1; dbSNP:rs397516202." evidence="21 27">
    <original>A</original>
    <variation>T</variation>
    <location>
        <position position="1379"/>
    </location>
</feature>
<feature type="sequence variant" id="VAR_019869" description="In CMH1; dbSNP:rs730880910." evidence="27">
    <original>R</original>
    <variation>W</variation>
    <location>
        <position position="1382"/>
    </location>
</feature>
<feature type="sequence variant" id="VAR_045928" description="In CMH1; dbSNP:rs201895208." evidence="55">
    <original>L</original>
    <variation>M</variation>
    <location>
        <position position="1414"/>
    </location>
</feature>
<feature type="sequence variant" id="VAR_042825" description="In CMH1; dbSNP:rs145213771." evidence="37">
    <original>R</original>
    <variation>W</variation>
    <location>
        <position position="1420"/>
    </location>
</feature>
<feature type="sequence variant" id="VAR_042826" description="In CMD1S; uncertain significance; dbSNP:rs397516208." evidence="41">
    <original>E</original>
    <variation>K</variation>
    <location>
        <position position="1426"/>
    </location>
</feature>
<feature type="sequence variant" id="VAR_042827" description="In CMH1; dbSNP:rs1358268382." evidence="42">
    <original>A</original>
    <variation>T</variation>
    <location>
        <position position="1454"/>
    </location>
</feature>
<feature type="sequence variant" id="VAR_042828" description="In CMH1 and CMD1S; likely benign; dbSNP:rs201307101." evidence="37 60">
    <original>K</original>
    <variation>N</variation>
    <location>
        <position position="1459"/>
    </location>
</feature>
<feature type="sequence variant" id="VAR_042829" description="In dbSNP:rs139646545." evidence="38">
    <original>R</original>
    <variation>C</variation>
    <location>
        <position position="1475"/>
    </location>
</feature>
<feature type="sequence variant" id="VAR_020819" description="In dbSNP:rs3729823." evidence="21 37 38 41">
    <original>S</original>
    <variation>C</variation>
    <location>
        <position position="1491"/>
    </location>
</feature>
<feature type="sequence variant" id="VAR_022369" description="In MPD1; dbSNP:rs121913647." evidence="36">
    <original>R</original>
    <variation>P</variation>
    <location>
        <position position="1500"/>
    </location>
</feature>
<feature type="sequence variant" id="VAR_042830" description="In CMH1; dbSNP:rs397516222." evidence="37">
    <original>T</original>
    <variation>S</variation>
    <location>
        <position position="1513"/>
    </location>
</feature>
<feature type="sequence variant" id="VAR_042831" evidence="43">
    <original>S</original>
    <variation>C</variation>
    <location>
        <position position="1519"/>
    </location>
</feature>
<feature type="sequence variant" id="VAR_020820" description="In CMH1; dbSNP:rs727505176." evidence="22">
    <original>E</original>
    <variation>K</variation>
    <location>
        <position position="1555"/>
    </location>
</feature>
<feature type="sequence variant" id="VAR_073884" description="In CMD1S; uncertain significance; dbSNP:rs750987717." evidence="60">
    <original>E</original>
    <variation>K</variation>
    <location>
        <position position="1573"/>
    </location>
</feature>
<feature type="sequence variant" id="VAR_042832" description="In MPD1." evidence="36">
    <location>
        <position position="1617"/>
    </location>
</feature>
<feature type="sequence variant" id="VAR_042833" description="In CMD1S; uncertain significance; dbSNP:rs397516232." evidence="41">
    <original>R</original>
    <variation>C</variation>
    <location>
        <position position="1634"/>
    </location>
</feature>
<feature type="sequence variant" id="VAR_022370" description="In MPD1; dbSNP:rs797044601." evidence="36">
    <original>A</original>
    <variation>P</variation>
    <location>
        <position position="1663"/>
    </location>
</feature>
<feature type="sequence variant" id="VAR_019870" description="In CMH1; uncertain significance; dbSNP:rs748373063." evidence="27">
    <original>V</original>
    <variation>M</variation>
    <location>
        <position position="1692"/>
    </location>
</feature>
<feature type="sequence variant" id="VAR_022371" description="In MPD1; dbSNP:rs797044602." evidence="36">
    <original>L</original>
    <variation>P</variation>
    <location>
        <position position="1706"/>
    </location>
</feature>
<feature type="sequence variant" id="VAR_042834" description="In CMH1; dbSNP:rs121913650." evidence="38">
    <original>R</original>
    <variation>W</variation>
    <location>
        <position position="1712"/>
    </location>
</feature>
<feature type="sequence variant" id="VAR_042835" description="In MPD1." evidence="36">
    <location>
        <position position="1729"/>
    </location>
</feature>
<feature type="sequence variant" id="VAR_072816" description="In CMH1; dbSNP:rs730880916." evidence="64">
    <original>E</original>
    <variation>K</variation>
    <location>
        <position position="1752"/>
    </location>
</feature>
<feature type="sequence variant" id="VAR_042836" description="In CMH1; dbSNP:rs545585809." evidence="38">
    <original>E</original>
    <variation>K</variation>
    <location>
        <position position="1753"/>
    </location>
</feature>
<feature type="sequence variant" id="VAR_042837" description="In CMH1; uncertain significance; dbSNP:rs397516241." evidence="37">
    <original>E</original>
    <variation>K</variation>
    <location>
        <position position="1768"/>
    </location>
</feature>
<feature type="sequence variant" id="VAR_020821" description="In CMH1; uncertain significance; dbSNP:rs369437262." evidence="21">
    <original>S</original>
    <variation>G</variation>
    <location>
        <position position="1776"/>
    </location>
</feature>
<feature type="sequence variant" id="VAR_073885" description="In LVNC5." evidence="56">
    <original>S</original>
    <variation>T</variation>
    <location>
        <position position="1776"/>
    </location>
</feature>
<feature type="sequence variant" id="VAR_019871" description="In CMH1; uncertain significance; dbSNP:rs200939753." evidence="27">
    <original>A</original>
    <variation>T</variation>
    <location>
        <position position="1777"/>
    </location>
</feature>
<feature type="sequence variant" id="VAR_073886" description="In CMYO7A; dbSNP:rs121913654." evidence="48">
    <original>L</original>
    <variation>P</variation>
    <location>
        <position position="1793"/>
    </location>
</feature>
<feature type="sequence variant" id="VAR_073887" description="In CMYO7B; uncertain significance; dbSNP:rs145734640." evidence="65">
    <original>R</original>
    <variation>W</variation>
    <location>
        <position position="1820"/>
    </location>
</feature>
<feature type="sequence variant" id="VAR_017754" description="In CMYO7A; dbSNP:rs28933098." evidence="34 51">
    <original>R</original>
    <variation>W</variation>
    <location>
        <position position="1845"/>
    </location>
</feature>
<feature type="sequence variant" id="VAR_042838" description="In CMH1; dbSNP:rs372381770." evidence="37">
    <original>T</original>
    <variation>M</variation>
    <location>
        <position position="1854"/>
    </location>
</feature>
<feature type="sequence variant" id="VAR_042839" description="In CMH1; uncertain significance; dbSNP:rs121913652." evidence="52">
    <original>E</original>
    <variation>K</variation>
    <location>
        <position position="1883"/>
    </location>
</feature>
<feature type="sequence variant" id="VAR_042840" description="In CMYO7A; dbSNP:rs121913649." evidence="35">
    <original>H</original>
    <variation>L</variation>
    <location>
        <position position="1901"/>
    </location>
</feature>
<feature type="sequence variant" id="VAR_073888" description="In CMD1S; dbSNP:rs138110910." evidence="60">
    <original>N</original>
    <variation>K</variation>
    <location>
        <position position="1918"/>
    </location>
</feature>
<feature type="sequence variant" id="VAR_042841" description="In dbSNP:rs1343372308." evidence="37">
    <original>K</original>
    <variation>N</variation>
    <location>
        <position position="1919"/>
    </location>
</feature>
<feature type="sequence variant" id="VAR_042842" description="In CMH1; uncertain significance; dbSNP:rs730880918." evidence="37">
    <original>T</original>
    <variation>M</variation>
    <location>
        <position position="1929"/>
    </location>
</feature>
<feature type="sequence conflict" description="In Ref. 8; AAA60384." evidence="88" ref="8">
    <original>E</original>
    <variation>Q</variation>
    <location>
        <position position="88"/>
    </location>
</feature>
<feature type="sequence conflict" description="In Ref. 10." evidence="88" ref="10">
    <original>K</original>
    <variation>G</variation>
    <location>
        <position position="397"/>
    </location>
</feature>
<feature type="sequence conflict" description="In Ref. 2; CAA37068." evidence="88" ref="2">
    <original>CII</original>
    <variation>LYH</variation>
    <location>
        <begin position="672"/>
        <end position="674"/>
    </location>
</feature>
<feature type="sequence conflict" description="In Ref. 2; CAA37068." evidence="88" ref="2">
    <original>R</original>
    <variation>A</variation>
    <location>
        <position position="858"/>
    </location>
</feature>
<feature type="sequence conflict" description="In Ref. 2; CAA37068." evidence="88" ref="2">
    <original>KL</original>
    <variation>NV</variation>
    <location>
        <begin position="942"/>
        <end position="943"/>
    </location>
</feature>
<feature type="sequence conflict" description="In Ref. 13; CAA35940." evidence="88" ref="13">
    <original>D</original>
    <variation>E</variation>
    <location>
        <position position="1077"/>
    </location>
</feature>
<feature type="sequence conflict" description="In Ref. 2; CAA37068 and 3; CAC20413." evidence="88" ref="2 3">
    <original>V</original>
    <variation>C</variation>
    <location>
        <position position="1159"/>
    </location>
</feature>
<feature type="sequence conflict" description="In Ref. 4; ACH92815." evidence="88" ref="4">
    <original>I</original>
    <variation>M</variation>
    <location>
        <position position="1207"/>
    </location>
</feature>
<feature type="sequence conflict" description="In Ref. 14; CAA27381." evidence="88" ref="14">
    <original>E</original>
    <variation>G</variation>
    <location>
        <position position="1313"/>
    </location>
</feature>
<feature type="sequence conflict" description="In Ref. 14; CAA27381." evidence="88" ref="14">
    <original>E</original>
    <variation>R</variation>
    <location>
        <position position="1356"/>
    </location>
</feature>
<feature type="sequence conflict" description="In Ref. 14; CAA27381." evidence="88" ref="14">
    <original>RV</original>
    <variation>GD</variation>
    <location>
        <begin position="1359"/>
        <end position="1360"/>
    </location>
</feature>
<feature type="sequence conflict" description="In Ref. 17; AAA36345." evidence="88" ref="17">
    <original>KL</original>
    <variation>NV</variation>
    <location>
        <begin position="1575"/>
        <end position="1576"/>
    </location>
</feature>
<feature type="sequence conflict" description="In Ref. 14; CAA27381." evidence="88" ref="14">
    <original>LA</original>
    <variation>RQ</variation>
    <location>
        <begin position="1576"/>
        <end position="1577"/>
    </location>
</feature>
<feature type="sequence conflict" description="In Ref. 2; CAA37068." evidence="88" ref="2">
    <location>
        <position position="1681"/>
    </location>
</feature>
<feature type="sequence conflict" description="In Ref. 13; CAA35940." evidence="88" ref="13">
    <original>EQ</original>
    <variation>DE</variation>
    <location>
        <begin position="1703"/>
        <end position="1704"/>
    </location>
</feature>
<feature type="sequence conflict" description="In Ref. 2; CAA37068 and 16; AAA36343." evidence="88" ref="2 16">
    <original>EQ</original>
    <variation>DR</variation>
    <location>
        <begin position="1703"/>
        <end position="1704"/>
    </location>
</feature>
<feature type="sequence conflict" description="In Ref. 18; CAA29119." evidence="88" ref="18">
    <original>D</original>
    <variation>A</variation>
    <location>
        <position position="1866"/>
    </location>
</feature>
<feature type="helix" evidence="93">
    <location>
        <begin position="3"/>
        <end position="15"/>
    </location>
</feature>
<feature type="helix" evidence="93">
    <location>
        <begin position="20"/>
        <end position="26"/>
    </location>
</feature>
<feature type="turn" evidence="93">
    <location>
        <begin position="33"/>
        <end position="35"/>
    </location>
</feature>
<feature type="strand" evidence="93">
    <location>
        <begin position="36"/>
        <end position="41"/>
    </location>
</feature>
<feature type="turn" evidence="93">
    <location>
        <begin position="42"/>
        <end position="44"/>
    </location>
</feature>
<feature type="strand" evidence="93">
    <location>
        <begin position="45"/>
        <end position="55"/>
    </location>
</feature>
<feature type="strand" evidence="93">
    <location>
        <begin position="58"/>
        <end position="63"/>
    </location>
</feature>
<feature type="turn" evidence="92">
    <location>
        <begin position="64"/>
        <end position="66"/>
    </location>
</feature>
<feature type="strand" evidence="93">
    <location>
        <begin position="68"/>
        <end position="72"/>
    </location>
</feature>
<feature type="helix" evidence="93">
    <location>
        <begin position="73"/>
        <end position="75"/>
    </location>
</feature>
<feature type="helix" evidence="93">
    <location>
        <begin position="82"/>
        <end position="84"/>
    </location>
</feature>
<feature type="helix" evidence="93">
    <location>
        <begin position="90"/>
        <end position="92"/>
    </location>
</feature>
<feature type="helix" evidence="93">
    <location>
        <begin position="98"/>
        <end position="110"/>
    </location>
</feature>
<feature type="strand" evidence="93">
    <location>
        <begin position="115"/>
        <end position="118"/>
    </location>
</feature>
<feature type="strand" evidence="93">
    <location>
        <begin position="121"/>
        <end position="125"/>
    </location>
</feature>
<feature type="helix" evidence="102">
    <location>
        <begin position="132"/>
        <end position="134"/>
    </location>
</feature>
<feature type="helix" evidence="93">
    <location>
        <begin position="136"/>
        <end position="142"/>
    </location>
</feature>
<feature type="helix" evidence="93">
    <location>
        <begin position="147"/>
        <end position="149"/>
    </location>
</feature>
<feature type="helix" evidence="93">
    <location>
        <begin position="154"/>
        <end position="168"/>
    </location>
</feature>
<feature type="strand" evidence="93">
    <location>
        <begin position="172"/>
        <end position="179"/>
    </location>
</feature>
<feature type="helix" evidence="93">
    <location>
        <begin position="184"/>
        <end position="198"/>
    </location>
</feature>
<feature type="helix" evidence="93">
    <location>
        <begin position="216"/>
        <end position="231"/>
    </location>
</feature>
<feature type="strand" evidence="102">
    <location>
        <begin position="239"/>
        <end position="242"/>
    </location>
</feature>
<feature type="strand" evidence="93">
    <location>
        <begin position="244"/>
        <end position="252"/>
    </location>
</feature>
<feature type="strand" evidence="93">
    <location>
        <begin position="256"/>
        <end position="266"/>
    </location>
</feature>
<feature type="helix" evidence="93">
    <location>
        <begin position="270"/>
        <end position="273"/>
    </location>
</feature>
<feature type="helix" evidence="93">
    <location>
        <begin position="284"/>
        <end position="289"/>
    </location>
</feature>
<feature type="helix" evidence="93">
    <location>
        <begin position="296"/>
        <end position="300"/>
    </location>
</feature>
<feature type="helix" evidence="93">
    <location>
        <begin position="307"/>
        <end position="309"/>
    </location>
</feature>
<feature type="helix" evidence="93">
    <location>
        <begin position="311"/>
        <end position="313"/>
    </location>
</feature>
<feature type="strand" evidence="103">
    <location>
        <begin position="321"/>
        <end position="323"/>
    </location>
</feature>
<feature type="helix" evidence="93">
    <location>
        <begin position="325"/>
        <end position="338"/>
    </location>
</feature>
<feature type="strand" evidence="103">
    <location>
        <begin position="339"/>
        <end position="341"/>
    </location>
</feature>
<feature type="helix" evidence="93">
    <location>
        <begin position="343"/>
        <end position="359"/>
    </location>
</feature>
<feature type="strand" evidence="93">
    <location>
        <begin position="364"/>
        <end position="366"/>
    </location>
</feature>
<feature type="strand" evidence="93">
    <location>
        <begin position="368"/>
        <end position="371"/>
    </location>
</feature>
<feature type="strand" evidence="93">
    <location>
        <begin position="373"/>
        <end position="376"/>
    </location>
</feature>
<feature type="helix" evidence="93">
    <location>
        <begin position="379"/>
        <end position="387"/>
    </location>
</feature>
<feature type="helix" evidence="93">
    <location>
        <begin position="392"/>
        <end position="400"/>
    </location>
</feature>
<feature type="strand" evidence="102">
    <location>
        <begin position="403"/>
        <end position="406"/>
    </location>
</feature>
<feature type="strand" evidence="102">
    <location>
        <begin position="409"/>
        <end position="412"/>
    </location>
</feature>
<feature type="helix" evidence="93">
    <location>
        <begin position="417"/>
        <end position="447"/>
    </location>
</feature>
<feature type="strand" evidence="93">
    <location>
        <begin position="455"/>
        <end position="463"/>
    </location>
</feature>
<feature type="strand" evidence="93">
    <location>
        <begin position="469"/>
        <end position="471"/>
    </location>
</feature>
<feature type="helix" evidence="93">
    <location>
        <begin position="473"/>
        <end position="503"/>
    </location>
</feature>
<feature type="helix" evidence="93">
    <location>
        <begin position="513"/>
        <end position="517"/>
    </location>
</feature>
<feature type="helix" evidence="93">
    <location>
        <begin position="518"/>
        <end position="525"/>
    </location>
</feature>
<feature type="helix" evidence="93">
    <location>
        <begin position="530"/>
        <end position="537"/>
    </location>
</feature>
<feature type="strand" evidence="102">
    <location>
        <begin position="540"/>
        <end position="542"/>
    </location>
</feature>
<feature type="helix" evidence="93">
    <location>
        <begin position="545"/>
        <end position="556"/>
    </location>
</feature>
<feature type="turn" evidence="93">
    <location>
        <begin position="557"/>
        <end position="559"/>
    </location>
</feature>
<feature type="strand" evidence="102">
    <location>
        <begin position="560"/>
        <end position="564"/>
    </location>
</feature>
<feature type="strand" evidence="92">
    <location>
        <begin position="570"/>
        <end position="572"/>
    </location>
</feature>
<feature type="strand" evidence="93">
    <location>
        <begin position="577"/>
        <end position="581"/>
    </location>
</feature>
<feature type="strand" evidence="93">
    <location>
        <begin position="584"/>
        <end position="588"/>
    </location>
</feature>
<feature type="helix" evidence="93">
    <location>
        <begin position="593"/>
        <end position="598"/>
    </location>
</feature>
<feature type="helix" evidence="93">
    <location>
        <begin position="603"/>
        <end position="610"/>
    </location>
</feature>
<feature type="strand" evidence="102">
    <location>
        <begin position="612"/>
        <end position="614"/>
    </location>
</feature>
<feature type="helix" evidence="93">
    <location>
        <begin position="615"/>
        <end position="620"/>
    </location>
</feature>
<feature type="strand" evidence="102">
    <location>
        <begin position="642"/>
        <end position="644"/>
    </location>
</feature>
<feature type="helix" evidence="93">
    <location>
        <begin position="647"/>
        <end position="663"/>
    </location>
</feature>
<feature type="strand" evidence="93">
    <location>
        <begin position="665"/>
        <end position="673"/>
    </location>
</feature>
<feature type="strand" evidence="102">
    <location>
        <begin position="677"/>
        <end position="679"/>
    </location>
</feature>
<feature type="helix" evidence="93">
    <location>
        <begin position="686"/>
        <end position="695"/>
    </location>
</feature>
<feature type="helix" evidence="93">
    <location>
        <begin position="698"/>
        <end position="706"/>
    </location>
</feature>
<feature type="strand" evidence="93">
    <location>
        <begin position="711"/>
        <end position="714"/>
    </location>
</feature>
<feature type="helix" evidence="93">
    <location>
        <begin position="715"/>
        <end position="722"/>
    </location>
</feature>
<feature type="helix" evidence="93">
    <location>
        <begin position="723"/>
        <end position="725"/>
    </location>
</feature>
<feature type="helix" evidence="93">
    <location>
        <begin position="727"/>
        <end position="729"/>
    </location>
</feature>
<feature type="strand" evidence="93">
    <location>
        <begin position="733"/>
        <end position="735"/>
    </location>
</feature>
<feature type="helix" evidence="93">
    <location>
        <begin position="738"/>
        <end position="747"/>
    </location>
</feature>
<feature type="strand" evidence="93">
    <location>
        <begin position="749"/>
        <end position="751"/>
    </location>
</feature>
<feature type="strand" evidence="93">
    <location>
        <begin position="755"/>
        <end position="758"/>
    </location>
</feature>
<feature type="strand" evidence="93">
    <location>
        <begin position="760"/>
        <end position="765"/>
    </location>
</feature>
<feature type="helix" evidence="93">
    <location>
        <begin position="767"/>
        <end position="787"/>
    </location>
</feature>
<feature type="helix" evidence="91">
    <location>
        <begin position="838"/>
        <end position="958"/>
    </location>
</feature>
<feature type="turn" evidence="91">
    <location>
        <begin position="959"/>
        <end position="961"/>
    </location>
</feature>
<feature type="helix" evidence="101">
    <location>
        <begin position="1217"/>
        <end position="1276"/>
    </location>
</feature>
<feature type="helix" evidence="94">
    <location>
        <begin position="1361"/>
        <end position="1425"/>
    </location>
</feature>
<feature type="helix" evidence="97">
    <location>
        <begin position="1527"/>
        <end position="1570"/>
    </location>
</feature>
<feature type="turn" evidence="98">
    <location>
        <begin position="1571"/>
        <end position="1574"/>
    </location>
</feature>
<feature type="helix" evidence="98">
    <location>
        <begin position="1581"/>
        <end position="1586"/>
    </location>
</feature>
<feature type="helix" evidence="96">
    <location>
        <begin position="1590"/>
        <end position="1614"/>
    </location>
</feature>
<feature type="helix" evidence="96">
    <location>
        <begin position="1619"/>
        <end position="1640"/>
    </location>
</feature>
<feature type="helix" evidence="96">
    <location>
        <begin position="1646"/>
        <end position="1650"/>
    </location>
</feature>
<feature type="helix" evidence="96">
    <location>
        <begin position="1654"/>
        <end position="1656"/>
    </location>
</feature>
<feature type="helix" evidence="99">
    <location>
        <begin position="1677"/>
        <end position="1727"/>
    </location>
</feature>
<feature type="helix" evidence="100">
    <location>
        <begin position="1730"/>
        <end position="1768"/>
    </location>
</feature>
<feature type="helix" evidence="95">
    <location>
        <begin position="1777"/>
        <end position="1782"/>
    </location>
</feature>
<feature type="helix" evidence="95">
    <location>
        <begin position="1786"/>
        <end position="1790"/>
    </location>
</feature>
<feature type="helix" evidence="95">
    <location>
        <begin position="1793"/>
        <end position="1805"/>
    </location>
</feature>
<feature type="helix" evidence="95">
    <location>
        <begin position="1816"/>
        <end position="1830"/>
    </location>
</feature>
<feature type="turn" evidence="95">
    <location>
        <begin position="1833"/>
        <end position="1837"/>
    </location>
</feature>
<feature type="turn" evidence="95">
    <location>
        <begin position="1844"/>
        <end position="1847"/>
    </location>
</feature>
<feature type="helix" evidence="95">
    <location>
        <begin position="1850"/>
        <end position="1855"/>
    </location>
</feature>
<proteinExistence type="evidence at protein level"/>
<sequence>MGDSEMAVFGAAAPYLRKSEKERLEAQTRPFDLKKDVFVPDDKQEFVKAKIVSREGGKVTAETEYGKTVTVKEDQVMQQNPPKFDKIEDMAMLTFLHEPAVLYNLKDRYGSWMIYTYSGLFCVTVNPYKWLPVYTPEVVAAYRGKKRSEAPPHIFSISDNAYQYMLTDRENQSILITGESGAGKTVNTKRVIQYFAVIAAIGDRSKKDQSPGKGTLEDQIIQANPALEAFGNAKTVRNDNSSRFGKFIRIHFGATGKLASADIETYLLEKSRVIFQLKAERDYHIFYQILSNKKPELLDMLLITNNPYDYAFISQGETTVASIDDAEELMATDNAFDVLGFTSEEKNSMYKLTGAIMHFGNMKFKLKQREEQAEPDGTEEADKSAYLMGLNSADLLKGLCHPRVKVGNEYVTKGQNVQQVIYATGALAKAVYERMFNWMVTRINATLETKQPRQYFIGVLDIAGFEIFDFNSFEQLCINFTNEKLQQFFNHHMFVLEQEEYKKEGIEWTFIDFGMDLQACIDLIEKPMGIMSILEEECMFPKATDMTFKAKLFDNHLGKSANFQKPRNIKGKPEAHFSLIHYAGIVDYNIIGWLQKNKDPLNETVVGLYQKSSLKLLSTLFANYAGADAPIEKGKGKAKKGSSFQTVSALHRENLNKLMTNLRSTHPHFVRCIIPNETKSPGVMDNPLVMHQLRCNGVLEGIRICRKGFPNRILYGDFRQRYRILNPAAIPEGQFIDSRKGAEKLLSSLDIDHNQYKFGHTKVFFKAGLLGLLEEMRDERLSRIITRIQAQSRGVLARMEYKKLLERRDSLLVIQWNIRAFMGVKNWPWMKLYFKIKPLLKSAEREKEMASMKEEFTRLKEALEKSEARRKELEEKMVSLLQEKNDLQLQVQAEQDNLADAEERCDQLIKNKIQLEAKVKEMNERLEDEEEMNAELTAKKRKLEDECSELKRDIDDLELTLAKVEKEKHATENKVKNLTEEMAGLDEIIAKLTKEKKALQEAHQQALDDLQAEEDKVNTLTKAKVKLEQQVDDLEGSLEQEKKVRMDLERAKRKLEGDLKLTQESIMDLENDKQQLDERLKKKDFELNALNARIEDEQALGSQLQKKLKELQARIEELEEELEAERTARAKVEKLRSDLSRELEEISERLEEAGGATSVQIEMNKKREAEFQKMRRDLEEATLQHEATAAALRKKHADSVAELGEQIDNLQRVKQKLEKEKSEFKLELDDVTSNMEQIIKAKANLEKMCRTLEDQMNEHRSKAEETQRSVNDLTSQRAKLQTENGELSRQLDEKEALISQLTRGKLTYTQQLEDLKRQLEEEVKAKNALAHALQSARHDCDLLREQYEEETEAKAELQRVLSKANSEVAQWRTKYETDAIQRTEELEEAKKKLAQRLQEAEEAVEAVNAKCSSLEKTKHRLQNEIEDLMVDVERSNAAAAALDKKQRNFDKILAEWKQKYEESQSELESSQKEARSLSTELFKLKNAYEESLEHLETFKRENKNLQEEISDLTEQLGSSGKTIHELEKVRKQLEAEKMELQSALEEAEASLEHEEGKILRAQLEFNQIKAEIERKLAEKDEEMEQAKRNHLRVVDSLQTSLDAETRSRNEALRVKKKMEGDLNEMEIQLSHANRMAAEAQKQVKSLQSLLKDTQIQLDDAVRANDDLKENIAIVERRNNLLQAELEELRAVVEQTERSRKLAEQELIETSERVQLLHSQNTSLINQKKKMDADLSQLQTEVEEAVQECRNAEEKAKKAITDAAMMAEELKKEQDTSAHLERMKKNMEQTIKDLQHRLDEAEQIALKGGKKQLQKLEARVRELENELEAEQKRNAESVKGMRKSERRIKELTYQTEEDRKNLLRLQDLVDKLQLKVKAYKRQAEEAEEQANTNLSKFRKVQHELDEAEERADIAESQVNKLRAKSRDIGTKGLNEE</sequence>
<accession>P12883</accession>
<accession>A2TDB6</accession>
<accession>B6D424</accession>
<accession>Q14836</accession>
<accession>Q14837</accession>
<accession>Q14904</accession>
<accession>Q16579</accession>
<accession>Q2M1Y6</accession>
<accession>Q92679</accession>
<accession>Q9H1D5</accession>
<accession>Q9UDA2</accession>
<accession>Q9UMM8</accession>
<gene>
    <name type="primary">MYH7</name>
    <name type="synonym">MYHCB</name>
</gene>
<keyword id="KW-0002">3D-structure</keyword>
<keyword id="KW-0009">Actin-binding</keyword>
<keyword id="KW-0067">ATP-binding</keyword>
<keyword id="KW-0112">Calmodulin-binding</keyword>
<keyword id="KW-0122">Cardiomyopathy</keyword>
<keyword id="KW-0175">Coiled coil</keyword>
<keyword id="KW-0963">Cytoplasm</keyword>
<keyword id="KW-0225">Disease variant</keyword>
<keyword id="KW-0488">Methylation</keyword>
<keyword id="KW-0505">Motor protein</keyword>
<keyword id="KW-0514">Muscle protein</keyword>
<keyword id="KW-0518">Myosin</keyword>
<keyword id="KW-0547">Nucleotide-binding</keyword>
<keyword id="KW-0597">Phosphoprotein</keyword>
<keyword id="KW-1267">Proteomics identification</keyword>
<keyword id="KW-1185">Reference proteome</keyword>
<keyword id="KW-0787">Thick filament</keyword>
<name>MYH7_HUMAN</name>
<dbReference type="EMBL" id="M57965">
    <property type="protein sequence ID" value="AAA51837.1"/>
    <property type="molecule type" value="Genomic_DNA"/>
</dbReference>
<dbReference type="EMBL" id="M58018">
    <property type="protein sequence ID" value="AAA62830.1"/>
    <property type="molecule type" value="mRNA"/>
</dbReference>
<dbReference type="EMBL" id="X52889">
    <property type="protein sequence ID" value="CAA37068.1"/>
    <property type="molecule type" value="Genomic_DNA"/>
</dbReference>
<dbReference type="EMBL" id="AJ238393">
    <property type="protein sequence ID" value="CAC20413.1"/>
    <property type="molecule type" value="Genomic_DNA"/>
</dbReference>
<dbReference type="EMBL" id="EU747717">
    <property type="protein sequence ID" value="ACH92815.1"/>
    <property type="molecule type" value="mRNA"/>
</dbReference>
<dbReference type="EMBL" id="EF179180">
    <property type="protein sequence ID" value="ABN05283.1"/>
    <property type="molecule type" value="Genomic_DNA"/>
</dbReference>
<dbReference type="EMBL" id="CH471078">
    <property type="protein sequence ID" value="EAW66152.1"/>
    <property type="molecule type" value="Genomic_DNA"/>
</dbReference>
<dbReference type="EMBL" id="BC112171">
    <property type="protein sequence ID" value="AAI12172.1"/>
    <property type="molecule type" value="mRNA"/>
</dbReference>
<dbReference type="EMBL" id="BC112173">
    <property type="protein sequence ID" value="AAI12174.1"/>
    <property type="molecule type" value="mRNA"/>
</dbReference>
<dbReference type="EMBL" id="M25135">
    <property type="protein sequence ID" value="AAA60384.1"/>
    <property type="molecule type" value="Genomic_DNA"/>
</dbReference>
<dbReference type="EMBL" id="M25133">
    <property type="protein sequence ID" value="AAA60384.1"/>
    <property type="status" value="JOINED"/>
    <property type="molecule type" value="Genomic_DNA"/>
</dbReference>
<dbReference type="EMBL" id="M25134">
    <property type="protein sequence ID" value="AAA60384.1"/>
    <property type="status" value="JOINED"/>
    <property type="molecule type" value="Genomic_DNA"/>
</dbReference>
<dbReference type="EMBL" id="M27636">
    <property type="protein sequence ID" value="AAA79019.1"/>
    <property type="molecule type" value="Genomic_DNA"/>
</dbReference>
<dbReference type="EMBL" id="X04627">
    <property type="protein sequence ID" value="CAA28300.1"/>
    <property type="molecule type" value="Genomic_DNA"/>
</dbReference>
<dbReference type="EMBL" id="X04628">
    <property type="protein sequence ID" value="CAA28300.1"/>
    <property type="status" value="JOINED"/>
    <property type="molecule type" value="Genomic_DNA"/>
</dbReference>
<dbReference type="EMBL" id="X04629">
    <property type="protein sequence ID" value="CAA28300.1"/>
    <property type="status" value="JOINED"/>
    <property type="molecule type" value="Genomic_DNA"/>
</dbReference>
<dbReference type="EMBL" id="X04630">
    <property type="protein sequence ID" value="CAA28300.1"/>
    <property type="status" value="JOINED"/>
    <property type="molecule type" value="Genomic_DNA"/>
</dbReference>
<dbReference type="EMBL" id="X04631">
    <property type="protein sequence ID" value="CAA28300.1"/>
    <property type="status" value="JOINED"/>
    <property type="molecule type" value="Genomic_DNA"/>
</dbReference>
<dbReference type="EMBL" id="X04632">
    <property type="protein sequence ID" value="CAA28300.1"/>
    <property type="status" value="JOINED"/>
    <property type="molecule type" value="Genomic_DNA"/>
</dbReference>
<dbReference type="EMBL" id="X04633">
    <property type="protein sequence ID" value="CAA28300.1"/>
    <property type="status" value="JOINED"/>
    <property type="molecule type" value="Genomic_DNA"/>
</dbReference>
<dbReference type="EMBL" id="X51591">
    <property type="protein sequence ID" value="CAA35940.1"/>
    <property type="molecule type" value="mRNA"/>
</dbReference>
<dbReference type="EMBL" id="X03741">
    <property type="protein sequence ID" value="CAA27381.1"/>
    <property type="status" value="ALT_SEQ"/>
    <property type="molecule type" value="mRNA"/>
</dbReference>
<dbReference type="EMBL" id="X06976">
    <property type="protein sequence ID" value="CAA30039.1"/>
    <property type="molecule type" value="mRNA"/>
</dbReference>
<dbReference type="EMBL" id="M17712">
    <property type="protein sequence ID" value="AAA36343.1"/>
    <property type="molecule type" value="mRNA"/>
</dbReference>
<dbReference type="EMBL" id="M21665">
    <property type="protein sequence ID" value="AAA36345.1"/>
    <property type="molecule type" value="mRNA"/>
</dbReference>
<dbReference type="EMBL" id="X05631">
    <property type="protein sequence ID" value="CAA29119.1"/>
    <property type="molecule type" value="mRNA"/>
</dbReference>
<dbReference type="CCDS" id="CCDS9601.1"/>
<dbReference type="PIR" id="A37102">
    <property type="entry name" value="A37102"/>
</dbReference>
<dbReference type="RefSeq" id="NP_000248.2">
    <property type="nucleotide sequence ID" value="NM_000257.4"/>
</dbReference>
<dbReference type="RefSeq" id="NP_001393933.1">
    <property type="nucleotide sequence ID" value="NM_001407004.1"/>
</dbReference>
<dbReference type="RefSeq" id="XP_016876829.1">
    <property type="nucleotide sequence ID" value="XM_017021340.1"/>
</dbReference>
<dbReference type="PDB" id="2FXM">
    <property type="method" value="X-ray"/>
    <property type="resolution" value="2.70 A"/>
    <property type="chains" value="A/B=838-963"/>
</dbReference>
<dbReference type="PDB" id="2FXO">
    <property type="method" value="X-ray"/>
    <property type="resolution" value="2.50 A"/>
    <property type="chains" value="A/B/C/D=838-963"/>
</dbReference>
<dbReference type="PDB" id="3DTP">
    <property type="method" value="EM"/>
    <property type="resolution" value="20.00 A"/>
    <property type="chains" value="A=842-961, B=842-963"/>
</dbReference>
<dbReference type="PDB" id="4DB1">
    <property type="method" value="X-ray"/>
    <property type="resolution" value="2.60 A"/>
    <property type="chains" value="A/B=2-783"/>
</dbReference>
<dbReference type="PDB" id="4P7H">
    <property type="method" value="X-ray"/>
    <property type="resolution" value="3.20 A"/>
    <property type="chains" value="A/B=1-787"/>
</dbReference>
<dbReference type="PDB" id="4PA0">
    <property type="method" value="X-ray"/>
    <property type="resolution" value="2.25 A"/>
    <property type="chains" value="A/B=1-787"/>
</dbReference>
<dbReference type="PDB" id="4XA1">
    <property type="method" value="X-ray"/>
    <property type="resolution" value="3.20 A"/>
    <property type="chains" value="A/B/C/D=1173-1238"/>
</dbReference>
<dbReference type="PDB" id="4XA3">
    <property type="method" value="X-ray"/>
    <property type="resolution" value="2.55 A"/>
    <property type="chains" value="A/B=1361-1425"/>
</dbReference>
<dbReference type="PDB" id="4XA4">
    <property type="method" value="X-ray"/>
    <property type="resolution" value="2.33 A"/>
    <property type="chains" value="A/B=1551-1609"/>
</dbReference>
<dbReference type="PDB" id="4XA6">
    <property type="method" value="X-ray"/>
    <property type="resolution" value="3.42 A"/>
    <property type="chains" value="A/B/C/D=1777-1855"/>
</dbReference>
<dbReference type="PDB" id="5CHX">
    <property type="method" value="X-ray"/>
    <property type="resolution" value="2.30 A"/>
    <property type="chains" value="A/B=1590-1657"/>
</dbReference>
<dbReference type="PDB" id="5CJ0">
    <property type="method" value="X-ray"/>
    <property type="resolution" value="2.30 A"/>
    <property type="chains" value="A/B=1631-1692"/>
</dbReference>
<dbReference type="PDB" id="5CJ1">
    <property type="method" value="X-ray"/>
    <property type="resolution" value="2.10 A"/>
    <property type="chains" value="A/B/C/D/E/F/G/H=1526-1571"/>
</dbReference>
<dbReference type="PDB" id="5CJ4">
    <property type="method" value="X-ray"/>
    <property type="resolution" value="3.10 A"/>
    <property type="chains" value="A/B/C/D=1562-1622"/>
</dbReference>
<dbReference type="PDB" id="5TBY">
    <property type="method" value="EM"/>
    <property type="resolution" value="20.00 A"/>
    <property type="chains" value="A/B=1-1935"/>
</dbReference>
<dbReference type="PDB" id="5WJ7">
    <property type="method" value="X-ray"/>
    <property type="resolution" value="2.50 A"/>
    <property type="chains" value="A/B=1733-1797"/>
</dbReference>
<dbReference type="PDB" id="5WJB">
    <property type="method" value="X-ray"/>
    <property type="resolution" value="2.90 A"/>
    <property type="chains" value="A/B/C/D=1733-1797"/>
</dbReference>
<dbReference type="PDB" id="5WLQ">
    <property type="method" value="X-ray"/>
    <property type="resolution" value="3.10 A"/>
    <property type="chains" value="A=1677-1755"/>
</dbReference>
<dbReference type="PDB" id="5WLZ">
    <property type="method" value="X-ray"/>
    <property type="resolution" value="3.50 A"/>
    <property type="chains" value="A/B/C/D=1677-1758"/>
</dbReference>
<dbReference type="PDB" id="5WME">
    <property type="method" value="X-ray"/>
    <property type="resolution" value="2.30 A"/>
    <property type="chains" value="A/B/C/D=1730-1786"/>
</dbReference>
<dbReference type="PDB" id="6PF2">
    <property type="method" value="X-ray"/>
    <property type="resolution" value="2.17 A"/>
    <property type="chains" value="A/B=1217-1276"/>
</dbReference>
<dbReference type="PDB" id="6PFP">
    <property type="method" value="X-ray"/>
    <property type="resolution" value="2.20 A"/>
    <property type="chains" value="A/B/C/D=1473-1536"/>
</dbReference>
<dbReference type="PDB" id="8ACT">
    <property type="method" value="EM"/>
    <property type="resolution" value="3.60 A"/>
    <property type="chains" value="A/B=3-906"/>
</dbReference>
<dbReference type="PDB" id="8EFD">
    <property type="method" value="EM"/>
    <property type="resolution" value="3.80 A"/>
    <property type="chains" value="A=1-842"/>
</dbReference>
<dbReference type="PDB" id="8EFE">
    <property type="method" value="EM"/>
    <property type="resolution" value="3.80 A"/>
    <property type="chains" value="A=1-842"/>
</dbReference>
<dbReference type="PDB" id="8EFH">
    <property type="method" value="EM"/>
    <property type="resolution" value="3.30 A"/>
    <property type="chains" value="A=1-842"/>
</dbReference>
<dbReference type="PDB" id="8EFI">
    <property type="method" value="EM"/>
    <property type="resolution" value="3.40 A"/>
    <property type="chains" value="M=1-1935"/>
</dbReference>
<dbReference type="PDB" id="8ENC">
    <property type="method" value="EM"/>
    <property type="resolution" value="3.60 A"/>
    <property type="chains" value="M=1-1935"/>
</dbReference>
<dbReference type="PDB" id="8G4L">
    <property type="method" value="EM"/>
    <property type="resolution" value="6.40 A"/>
    <property type="chains" value="A/AA/AB/AG/AH/AI/AJ/AK/AL/AM/AN/AO/AP/AQ/AR/AS/AT/AU/AV/AW/AX/AY/AZ/B/BA/BB/BG/BH/BI/BJ=1-1935"/>
</dbReference>
<dbReference type="PDB" id="8ZB7">
    <property type="method" value="EM"/>
    <property type="resolution" value="3.19 A"/>
    <property type="chains" value="G/H/I/J/K/M=6-781"/>
</dbReference>
<dbReference type="PDB" id="8ZI9">
    <property type="method" value="EM"/>
    <property type="resolution" value="3.08 A"/>
    <property type="chains" value="M=6-781"/>
</dbReference>
<dbReference type="PDB" id="9GZ1">
    <property type="method" value="EM"/>
    <property type="resolution" value="3.70 A"/>
    <property type="chains" value="A/B=2-1138"/>
</dbReference>
<dbReference type="PDB" id="9GZ2">
    <property type="method" value="EM"/>
    <property type="resolution" value="2.90 A"/>
    <property type="chains" value="A=2-1138"/>
</dbReference>
<dbReference type="PDB" id="9GZ3">
    <property type="method" value="EM"/>
    <property type="resolution" value="3.40 A"/>
    <property type="chains" value="A=2-1138"/>
</dbReference>
<dbReference type="PDBsum" id="2FXM"/>
<dbReference type="PDBsum" id="2FXO"/>
<dbReference type="PDBsum" id="3DTP"/>
<dbReference type="PDBsum" id="4DB1"/>
<dbReference type="PDBsum" id="4P7H"/>
<dbReference type="PDBsum" id="4PA0"/>
<dbReference type="PDBsum" id="4XA1"/>
<dbReference type="PDBsum" id="4XA3"/>
<dbReference type="PDBsum" id="4XA4"/>
<dbReference type="PDBsum" id="4XA6"/>
<dbReference type="PDBsum" id="5CHX"/>
<dbReference type="PDBsum" id="5CJ0"/>
<dbReference type="PDBsum" id="5CJ1"/>
<dbReference type="PDBsum" id="5CJ4"/>
<dbReference type="PDBsum" id="5TBY"/>
<dbReference type="PDBsum" id="5WJ7"/>
<dbReference type="PDBsum" id="5WJB"/>
<dbReference type="PDBsum" id="5WLQ"/>
<dbReference type="PDBsum" id="5WLZ"/>
<dbReference type="PDBsum" id="5WME"/>
<dbReference type="PDBsum" id="6PF2"/>
<dbReference type="PDBsum" id="6PFP"/>
<dbReference type="PDBsum" id="8ACT"/>
<dbReference type="PDBsum" id="8EFD"/>
<dbReference type="PDBsum" id="8EFE"/>
<dbReference type="PDBsum" id="8EFH"/>
<dbReference type="PDBsum" id="8EFI"/>
<dbReference type="PDBsum" id="8ENC"/>
<dbReference type="PDBsum" id="8G4L"/>
<dbReference type="PDBsum" id="8ZB7"/>
<dbReference type="PDBsum" id="8ZI9"/>
<dbReference type="PDBsum" id="9GZ1"/>
<dbReference type="PDBsum" id="9GZ2"/>
<dbReference type="PDBsum" id="9GZ3"/>
<dbReference type="EMDB" id="EMD-15353"/>
<dbReference type="EMDB" id="EMD-28080"/>
<dbReference type="EMDB" id="EMD-28081"/>
<dbReference type="EMDB" id="EMD-28082"/>
<dbReference type="EMDB" id="EMD-28083"/>
<dbReference type="EMDB" id="EMD-28270"/>
<dbReference type="EMDB" id="EMD-29722"/>
<dbReference type="EMDB" id="EMD-39896"/>
<dbReference type="EMDB" id="EMD-51719"/>
<dbReference type="EMDB" id="EMD-51720"/>
<dbReference type="EMDB" id="EMD-51721"/>
<dbReference type="EMDB" id="EMD-60122"/>
<dbReference type="SMR" id="P12883"/>
<dbReference type="BioGRID" id="110710">
    <property type="interactions" value="113"/>
</dbReference>
<dbReference type="FunCoup" id="P12883">
    <property type="interactions" value="808"/>
</dbReference>
<dbReference type="IntAct" id="P12883">
    <property type="interactions" value="67"/>
</dbReference>
<dbReference type="MINT" id="P12883"/>
<dbReference type="STRING" id="9606.ENSP00000347507"/>
<dbReference type="ChEMBL" id="CHEMBL3831286"/>
<dbReference type="DrugBank" id="DB08378">
    <property type="generic name" value="4-[4-(2,5-DIOXO-PYRROLIDIN-1-YL)-PHENYLAMINO]-4-HYDROXY-BUTYRIC ACID"/>
</dbReference>
<dbReference type="DrugBank" id="DB14921">
    <property type="generic name" value="Mavacamten"/>
</dbReference>
<dbReference type="DrugCentral" id="P12883"/>
<dbReference type="CarbonylDB" id="P12883"/>
<dbReference type="GlyGen" id="P12883">
    <property type="glycosylation" value="1 site, 1 O-linked glycan (1 site)"/>
</dbReference>
<dbReference type="iPTMnet" id="P12883"/>
<dbReference type="PhosphoSitePlus" id="P12883"/>
<dbReference type="SwissPalm" id="P12883"/>
<dbReference type="BioMuta" id="MYH7"/>
<dbReference type="DMDM" id="83304912"/>
<dbReference type="jPOST" id="P12883"/>
<dbReference type="MassIVE" id="P12883"/>
<dbReference type="PaxDb" id="9606-ENSP00000347507"/>
<dbReference type="PeptideAtlas" id="P12883"/>
<dbReference type="ProteomicsDB" id="52883"/>
<dbReference type="Pumba" id="P12883"/>
<dbReference type="ABCD" id="P12883">
    <property type="antibodies" value="2 sequenced antibodies"/>
</dbReference>
<dbReference type="Antibodypedia" id="92">
    <property type="antibodies" value="310 antibodies from 31 providers"/>
</dbReference>
<dbReference type="DNASU" id="4625"/>
<dbReference type="Ensembl" id="ENST00000355349.4">
    <property type="protein sequence ID" value="ENSP00000347507.3"/>
    <property type="gene ID" value="ENSG00000092054.14"/>
</dbReference>
<dbReference type="Ensembl" id="ENST00000713769.1">
    <property type="protein sequence ID" value="ENSP00000519071.1"/>
    <property type="gene ID" value="ENSG00000092054.14"/>
</dbReference>
<dbReference type="GeneID" id="4625"/>
<dbReference type="KEGG" id="hsa:4625"/>
<dbReference type="MANE-Select" id="ENST00000355349.4">
    <property type="protein sequence ID" value="ENSP00000347507.3"/>
    <property type="RefSeq nucleotide sequence ID" value="NM_000257.4"/>
    <property type="RefSeq protein sequence ID" value="NP_000248.2"/>
</dbReference>
<dbReference type="UCSC" id="uc001wjx.4">
    <property type="organism name" value="human"/>
</dbReference>
<dbReference type="AGR" id="HGNC:7577"/>
<dbReference type="CTD" id="4625"/>
<dbReference type="DisGeNET" id="4625"/>
<dbReference type="GeneCards" id="MYH7"/>
<dbReference type="GeneReviews" id="MYH7"/>
<dbReference type="HGNC" id="HGNC:7577">
    <property type="gene designation" value="MYH7"/>
</dbReference>
<dbReference type="HPA" id="ENSG00000092054">
    <property type="expression patterns" value="Group enriched (heart muscle, skeletal muscle, tongue)"/>
</dbReference>
<dbReference type="MalaCards" id="MYH7"/>
<dbReference type="MIM" id="160500">
    <property type="type" value="phenotype"/>
</dbReference>
<dbReference type="MIM" id="160760">
    <property type="type" value="gene"/>
</dbReference>
<dbReference type="MIM" id="192600">
    <property type="type" value="phenotype"/>
</dbReference>
<dbReference type="MIM" id="255160">
    <property type="type" value="phenotype"/>
</dbReference>
<dbReference type="MIM" id="608358">
    <property type="type" value="phenotype"/>
</dbReference>
<dbReference type="MIM" id="613426">
    <property type="type" value="phenotype"/>
</dbReference>
<dbReference type="neXtProt" id="NX_P12883"/>
<dbReference type="OpenTargets" id="ENSG00000092054"/>
<dbReference type="Orphanet" id="636965">
    <property type="disease" value="Autosomal dominant myosin storage myopathy"/>
</dbReference>
<dbReference type="Orphanet" id="636970">
    <property type="disease" value="Autosomal recessive myosin storage myopathy"/>
</dbReference>
<dbReference type="Orphanet" id="324604">
    <property type="disease" value="Classic multiminicore myopathy"/>
</dbReference>
<dbReference type="Orphanet" id="1880">
    <property type="disease" value="Ebstein malformation of the tricuspid valve"/>
</dbReference>
<dbReference type="Orphanet" id="154">
    <property type="disease" value="Familial isolated dilated cardiomyopathy"/>
</dbReference>
<dbReference type="Orphanet" id="59135">
    <property type="disease" value="Laing distal myopathy"/>
</dbReference>
<dbReference type="Orphanet" id="54260">
    <property type="disease" value="Left ventricular noncompaction"/>
</dbReference>
<dbReference type="PharmGKB" id="PA31374"/>
<dbReference type="VEuPathDB" id="HostDB:ENSG00000092054"/>
<dbReference type="eggNOG" id="KOG0161">
    <property type="taxonomic scope" value="Eukaryota"/>
</dbReference>
<dbReference type="GeneTree" id="ENSGT00940000159432"/>
<dbReference type="HOGENOM" id="CLU_000192_8_1_1"/>
<dbReference type="InParanoid" id="P12883"/>
<dbReference type="OMA" id="RCYFASK"/>
<dbReference type="OrthoDB" id="312459at2759"/>
<dbReference type="PAN-GO" id="P12883">
    <property type="GO annotations" value="9 GO annotations based on evolutionary models"/>
</dbReference>
<dbReference type="PhylomeDB" id="P12883"/>
<dbReference type="TreeFam" id="TF314375"/>
<dbReference type="PathwayCommons" id="P12883"/>
<dbReference type="SignaLink" id="P12883"/>
<dbReference type="SIGNOR" id="P12883"/>
<dbReference type="BioGRID-ORCS" id="4625">
    <property type="hits" value="9 hits in 1149 CRISPR screens"/>
</dbReference>
<dbReference type="ChiTaRS" id="MYH7">
    <property type="organism name" value="human"/>
</dbReference>
<dbReference type="EvolutionaryTrace" id="P12883"/>
<dbReference type="GeneWiki" id="MYH7"/>
<dbReference type="GenomeRNAi" id="4625"/>
<dbReference type="Pharos" id="P12883">
    <property type="development level" value="Tclin"/>
</dbReference>
<dbReference type="PRO" id="PR:P12883"/>
<dbReference type="Proteomes" id="UP000005640">
    <property type="component" value="Chromosome 14"/>
</dbReference>
<dbReference type="RNAct" id="P12883">
    <property type="molecule type" value="protein"/>
</dbReference>
<dbReference type="Bgee" id="ENSG00000092054">
    <property type="expression patterns" value="Expressed in apex of heart and 104 other cell types or tissues"/>
</dbReference>
<dbReference type="GO" id="GO:0005737">
    <property type="term" value="C:cytoplasm"/>
    <property type="evidence" value="ECO:0000318"/>
    <property type="project" value="GO_Central"/>
</dbReference>
<dbReference type="GO" id="GO:0005859">
    <property type="term" value="C:muscle myosin complex"/>
    <property type="evidence" value="ECO:0000304"/>
    <property type="project" value="UniProtKB"/>
</dbReference>
<dbReference type="GO" id="GO:0030016">
    <property type="term" value="C:myofibril"/>
    <property type="evidence" value="ECO:0000250"/>
    <property type="project" value="UniProtKB"/>
</dbReference>
<dbReference type="GO" id="GO:0016459">
    <property type="term" value="C:myosin complex"/>
    <property type="evidence" value="ECO:0000304"/>
    <property type="project" value="HGNC-UCL"/>
</dbReference>
<dbReference type="GO" id="GO:0032982">
    <property type="term" value="C:myosin filament"/>
    <property type="evidence" value="ECO:0000314"/>
    <property type="project" value="BHF-UCL"/>
</dbReference>
<dbReference type="GO" id="GO:0016460">
    <property type="term" value="C:myosin II complex"/>
    <property type="evidence" value="ECO:0000318"/>
    <property type="project" value="GO_Central"/>
</dbReference>
<dbReference type="GO" id="GO:0030017">
    <property type="term" value="C:sarcomere"/>
    <property type="evidence" value="ECO:0000250"/>
    <property type="project" value="UniProtKB"/>
</dbReference>
<dbReference type="GO" id="GO:0001725">
    <property type="term" value="C:stress fiber"/>
    <property type="evidence" value="ECO:0007669"/>
    <property type="project" value="Ensembl"/>
</dbReference>
<dbReference type="GO" id="GO:0030018">
    <property type="term" value="C:Z disc"/>
    <property type="evidence" value="ECO:0007669"/>
    <property type="project" value="Ensembl"/>
</dbReference>
<dbReference type="GO" id="GO:0051015">
    <property type="term" value="F:actin filament binding"/>
    <property type="evidence" value="ECO:0000318"/>
    <property type="project" value="GO_Central"/>
</dbReference>
<dbReference type="GO" id="GO:0005524">
    <property type="term" value="F:ATP binding"/>
    <property type="evidence" value="ECO:0007669"/>
    <property type="project" value="UniProtKB-KW"/>
</dbReference>
<dbReference type="GO" id="GO:0005516">
    <property type="term" value="F:calmodulin binding"/>
    <property type="evidence" value="ECO:0007669"/>
    <property type="project" value="UniProtKB-KW"/>
</dbReference>
<dbReference type="GO" id="GO:0000146">
    <property type="term" value="F:microfilament motor activity"/>
    <property type="evidence" value="ECO:0000314"/>
    <property type="project" value="BHF-UCL"/>
</dbReference>
<dbReference type="GO" id="GO:0007512">
    <property type="term" value="P:adult heart development"/>
    <property type="evidence" value="ECO:0000315"/>
    <property type="project" value="HGNC-UCL"/>
</dbReference>
<dbReference type="GO" id="GO:0046034">
    <property type="term" value="P:ATP metabolic process"/>
    <property type="evidence" value="ECO:0000314"/>
    <property type="project" value="BHF-UCL"/>
</dbReference>
<dbReference type="GO" id="GO:0060048">
    <property type="term" value="P:cardiac muscle contraction"/>
    <property type="evidence" value="ECO:0000315"/>
    <property type="project" value="BHF-UCL"/>
</dbReference>
<dbReference type="GO" id="GO:0014898">
    <property type="term" value="P:cardiac muscle hypertrophy in response to stress"/>
    <property type="evidence" value="ECO:0007669"/>
    <property type="project" value="Ensembl"/>
</dbReference>
<dbReference type="GO" id="GO:0006936">
    <property type="term" value="P:muscle contraction"/>
    <property type="evidence" value="ECO:0000314"/>
    <property type="project" value="HGNC-UCL"/>
</dbReference>
<dbReference type="GO" id="GO:0030049">
    <property type="term" value="P:muscle filament sliding"/>
    <property type="evidence" value="ECO:0000315"/>
    <property type="project" value="HGNC-UCL"/>
</dbReference>
<dbReference type="GO" id="GO:0002027">
    <property type="term" value="P:regulation of heart rate"/>
    <property type="evidence" value="ECO:0000314"/>
    <property type="project" value="HGNC-UCL"/>
</dbReference>
<dbReference type="GO" id="GO:0031449">
    <property type="term" value="P:regulation of slow-twitch skeletal muscle fiber contraction"/>
    <property type="evidence" value="ECO:0000315"/>
    <property type="project" value="BHF-UCL"/>
</dbReference>
<dbReference type="GO" id="GO:0002026">
    <property type="term" value="P:regulation of the force of heart contraction"/>
    <property type="evidence" value="ECO:0000314"/>
    <property type="project" value="BHF-UCL"/>
</dbReference>
<dbReference type="GO" id="GO:0014728">
    <property type="term" value="P:regulation of the force of skeletal muscle contraction"/>
    <property type="evidence" value="ECO:0000315"/>
    <property type="project" value="BHF-UCL"/>
</dbReference>
<dbReference type="GO" id="GO:0003009">
    <property type="term" value="P:skeletal muscle contraction"/>
    <property type="evidence" value="ECO:0000315"/>
    <property type="project" value="BHF-UCL"/>
</dbReference>
<dbReference type="GO" id="GO:0006941">
    <property type="term" value="P:striated muscle contraction"/>
    <property type="evidence" value="ECO:0000314"/>
    <property type="project" value="BHF-UCL"/>
</dbReference>
<dbReference type="GO" id="GO:0014883">
    <property type="term" value="P:transition between fast and slow fiber"/>
    <property type="evidence" value="ECO:0007669"/>
    <property type="project" value="Ensembl"/>
</dbReference>
<dbReference type="GO" id="GO:0055010">
    <property type="term" value="P:ventricular cardiac muscle tissue morphogenesis"/>
    <property type="evidence" value="ECO:0000315"/>
    <property type="project" value="HGNC-UCL"/>
</dbReference>
<dbReference type="CDD" id="cd14917">
    <property type="entry name" value="MYSc_Myh7"/>
    <property type="match status" value="1"/>
</dbReference>
<dbReference type="FunFam" id="1.10.10.820:FF:000001">
    <property type="entry name" value="Myosin heavy chain"/>
    <property type="match status" value="1"/>
</dbReference>
<dbReference type="FunFam" id="1.20.5.340:FF:000002">
    <property type="entry name" value="Myosin heavy chain"/>
    <property type="match status" value="1"/>
</dbReference>
<dbReference type="FunFam" id="1.20.5.340:FF:000003">
    <property type="entry name" value="Myosin heavy chain"/>
    <property type="match status" value="1"/>
</dbReference>
<dbReference type="FunFam" id="1.20.5.340:FF:000004">
    <property type="entry name" value="Myosin heavy chain"/>
    <property type="match status" value="1"/>
</dbReference>
<dbReference type="FunFam" id="1.20.5.340:FF:000006">
    <property type="entry name" value="Myosin heavy chain"/>
    <property type="match status" value="1"/>
</dbReference>
<dbReference type="FunFam" id="1.20.5.340:FF:000013">
    <property type="entry name" value="Myosin heavy chain"/>
    <property type="match status" value="1"/>
</dbReference>
<dbReference type="FunFam" id="1.20.5.370:FF:000001">
    <property type="entry name" value="Myosin heavy chain"/>
    <property type="match status" value="1"/>
</dbReference>
<dbReference type="FunFam" id="1.20.5.370:FF:000002">
    <property type="entry name" value="Myosin heavy chain"/>
    <property type="match status" value="1"/>
</dbReference>
<dbReference type="FunFam" id="1.20.5.370:FF:000003">
    <property type="entry name" value="Myosin heavy chain"/>
    <property type="match status" value="1"/>
</dbReference>
<dbReference type="FunFam" id="1.20.5.370:FF:000007">
    <property type="entry name" value="Myosin heavy chain"/>
    <property type="match status" value="1"/>
</dbReference>
<dbReference type="FunFam" id="1.20.5.370:FF:000008">
    <property type="entry name" value="Myosin heavy chain"/>
    <property type="match status" value="1"/>
</dbReference>
<dbReference type="FunFam" id="1.20.5.4820:FF:000001">
    <property type="entry name" value="Myosin heavy chain"/>
    <property type="match status" value="1"/>
</dbReference>
<dbReference type="FunFam" id="1.20.58.530:FF:000001">
    <property type="entry name" value="Myosin heavy chain"/>
    <property type="match status" value="1"/>
</dbReference>
<dbReference type="FunFam" id="2.30.30.360:FF:000001">
    <property type="entry name" value="Myosin heavy chain"/>
    <property type="match status" value="1"/>
</dbReference>
<dbReference type="FunFam" id="3.40.850.10:FF:000024">
    <property type="entry name" value="Myosin heavy chain, isoform J"/>
    <property type="match status" value="1"/>
</dbReference>
<dbReference type="FunFam" id="1.20.120.720:FF:000001">
    <property type="entry name" value="Myosin heavy chain, muscle"/>
    <property type="match status" value="1"/>
</dbReference>
<dbReference type="Gene3D" id="1.10.10.820">
    <property type="match status" value="1"/>
</dbReference>
<dbReference type="Gene3D" id="1.20.5.340">
    <property type="match status" value="5"/>
</dbReference>
<dbReference type="Gene3D" id="1.20.5.370">
    <property type="match status" value="4"/>
</dbReference>
<dbReference type="Gene3D" id="1.20.5.4820">
    <property type="match status" value="1"/>
</dbReference>
<dbReference type="Gene3D" id="1.20.58.530">
    <property type="match status" value="1"/>
</dbReference>
<dbReference type="Gene3D" id="6.10.250.2420">
    <property type="match status" value="1"/>
</dbReference>
<dbReference type="Gene3D" id="3.40.850.10">
    <property type="entry name" value="Kinesin motor domain"/>
    <property type="match status" value="1"/>
</dbReference>
<dbReference type="Gene3D" id="2.30.30.360">
    <property type="entry name" value="Myosin S1 fragment, N-terminal"/>
    <property type="match status" value="1"/>
</dbReference>
<dbReference type="Gene3D" id="1.20.120.720">
    <property type="entry name" value="Myosin VI head, motor domain, U50 subdomain"/>
    <property type="match status" value="1"/>
</dbReference>
<dbReference type="InterPro" id="IPR000048">
    <property type="entry name" value="IQ_motif_EF-hand-BS"/>
</dbReference>
<dbReference type="InterPro" id="IPR036961">
    <property type="entry name" value="Kinesin_motor_dom_sf"/>
</dbReference>
<dbReference type="InterPro" id="IPR001609">
    <property type="entry name" value="Myosin_head_motor_dom-like"/>
</dbReference>
<dbReference type="InterPro" id="IPR004009">
    <property type="entry name" value="Myosin_N"/>
</dbReference>
<dbReference type="InterPro" id="IPR008989">
    <property type="entry name" value="Myosin_S1_N"/>
</dbReference>
<dbReference type="InterPro" id="IPR002928">
    <property type="entry name" value="Myosin_tail"/>
</dbReference>
<dbReference type="InterPro" id="IPR027417">
    <property type="entry name" value="P-loop_NTPase"/>
</dbReference>
<dbReference type="InterPro" id="IPR014751">
    <property type="entry name" value="XRCC4-like_C"/>
</dbReference>
<dbReference type="PANTHER" id="PTHR45615">
    <property type="entry name" value="MYOSIN HEAVY CHAIN, NON-MUSCLE"/>
    <property type="match status" value="1"/>
</dbReference>
<dbReference type="PANTHER" id="PTHR45615:SF1">
    <property type="entry name" value="MYOSIN-7"/>
    <property type="match status" value="1"/>
</dbReference>
<dbReference type="Pfam" id="PF00063">
    <property type="entry name" value="Myosin_head"/>
    <property type="match status" value="1"/>
</dbReference>
<dbReference type="Pfam" id="PF02736">
    <property type="entry name" value="Myosin_N"/>
    <property type="match status" value="1"/>
</dbReference>
<dbReference type="Pfam" id="PF01576">
    <property type="entry name" value="Myosin_tail_1"/>
    <property type="match status" value="1"/>
</dbReference>
<dbReference type="PRINTS" id="PR00193">
    <property type="entry name" value="MYOSINHEAVY"/>
</dbReference>
<dbReference type="SMART" id="SM00015">
    <property type="entry name" value="IQ"/>
    <property type="match status" value="1"/>
</dbReference>
<dbReference type="SMART" id="SM00242">
    <property type="entry name" value="MYSc"/>
    <property type="match status" value="1"/>
</dbReference>
<dbReference type="SUPFAM" id="SSF90257">
    <property type="entry name" value="Myosin rod fragments"/>
    <property type="match status" value="5"/>
</dbReference>
<dbReference type="SUPFAM" id="SSF52540">
    <property type="entry name" value="P-loop containing nucleoside triphosphate hydrolases"/>
    <property type="match status" value="1"/>
</dbReference>
<dbReference type="PROSITE" id="PS50096">
    <property type="entry name" value="IQ"/>
    <property type="match status" value="1"/>
</dbReference>
<dbReference type="PROSITE" id="PS51456">
    <property type="entry name" value="MYOSIN_MOTOR"/>
    <property type="match status" value="1"/>
</dbReference>
<dbReference type="PROSITE" id="PS51844">
    <property type="entry name" value="SH3_LIKE"/>
    <property type="match status" value="1"/>
</dbReference>
<evidence type="ECO:0000250" key="1">
    <source>
        <dbReference type="UniProtKB" id="P02563"/>
    </source>
</evidence>
<evidence type="ECO:0000250" key="2">
    <source>
        <dbReference type="UniProtKB" id="P02564"/>
    </source>
</evidence>
<evidence type="ECO:0000250" key="3">
    <source>
        <dbReference type="UniProtKB" id="Q02566"/>
    </source>
</evidence>
<evidence type="ECO:0000255" key="4"/>
<evidence type="ECO:0000255" key="5">
    <source>
        <dbReference type="PROSITE-ProRule" id="PRU00116"/>
    </source>
</evidence>
<evidence type="ECO:0000255" key="6">
    <source>
        <dbReference type="PROSITE-ProRule" id="PRU00782"/>
    </source>
</evidence>
<evidence type="ECO:0000255" key="7">
    <source>
        <dbReference type="PROSITE-ProRule" id="PRU01190"/>
    </source>
</evidence>
<evidence type="ECO:0000256" key="8">
    <source>
        <dbReference type="SAM" id="MobiDB-lite"/>
    </source>
</evidence>
<evidence type="ECO:0000269" key="9">
    <source>
    </source>
</evidence>
<evidence type="ECO:0000269" key="10">
    <source>
    </source>
</evidence>
<evidence type="ECO:0000269" key="11">
    <source>
    </source>
</evidence>
<evidence type="ECO:0000269" key="12">
    <source>
    </source>
</evidence>
<evidence type="ECO:0000269" key="13">
    <source>
    </source>
</evidence>
<evidence type="ECO:0000269" key="14">
    <source>
    </source>
</evidence>
<evidence type="ECO:0000269" key="15">
    <source>
    </source>
</evidence>
<evidence type="ECO:0000269" key="16">
    <source>
    </source>
</evidence>
<evidence type="ECO:0000269" key="17">
    <source>
    </source>
</evidence>
<evidence type="ECO:0000269" key="18">
    <source>
    </source>
</evidence>
<evidence type="ECO:0000269" key="19">
    <source>
    </source>
</evidence>
<evidence type="ECO:0000269" key="20">
    <source>
    </source>
</evidence>
<evidence type="ECO:0000269" key="21">
    <source>
    </source>
</evidence>
<evidence type="ECO:0000269" key="22">
    <source>
    </source>
</evidence>
<evidence type="ECO:0000269" key="23">
    <source>
    </source>
</evidence>
<evidence type="ECO:0000269" key="24">
    <source>
    </source>
</evidence>
<evidence type="ECO:0000269" key="25">
    <source>
    </source>
</evidence>
<evidence type="ECO:0000269" key="26">
    <source>
    </source>
</evidence>
<evidence type="ECO:0000269" key="27">
    <source>
    </source>
</evidence>
<evidence type="ECO:0000269" key="28">
    <source>
    </source>
</evidence>
<evidence type="ECO:0000269" key="29">
    <source>
    </source>
</evidence>
<evidence type="ECO:0000269" key="30">
    <source>
    </source>
</evidence>
<evidence type="ECO:0000269" key="31">
    <source>
    </source>
</evidence>
<evidence type="ECO:0000269" key="32">
    <source>
    </source>
</evidence>
<evidence type="ECO:0000269" key="33">
    <source>
    </source>
</evidence>
<evidence type="ECO:0000269" key="34">
    <source>
    </source>
</evidence>
<evidence type="ECO:0000269" key="35">
    <source>
    </source>
</evidence>
<evidence type="ECO:0000269" key="36">
    <source>
    </source>
</evidence>
<evidence type="ECO:0000269" key="37">
    <source>
    </source>
</evidence>
<evidence type="ECO:0000269" key="38">
    <source>
    </source>
</evidence>
<evidence type="ECO:0000269" key="39">
    <source>
    </source>
</evidence>
<evidence type="ECO:0000269" key="40">
    <source>
    </source>
</evidence>
<evidence type="ECO:0000269" key="41">
    <source>
    </source>
</evidence>
<evidence type="ECO:0000269" key="42">
    <source>
    </source>
</evidence>
<evidence type="ECO:0000269" key="43">
    <source>
    </source>
</evidence>
<evidence type="ECO:0000269" key="44">
    <source>
    </source>
</evidence>
<evidence type="ECO:0000269" key="45">
    <source>
    </source>
</evidence>
<evidence type="ECO:0000269" key="46">
    <source>
    </source>
</evidence>
<evidence type="ECO:0000269" key="47">
    <source>
    </source>
</evidence>
<evidence type="ECO:0000269" key="48">
    <source>
    </source>
</evidence>
<evidence type="ECO:0000269" key="49">
    <source>
    </source>
</evidence>
<evidence type="ECO:0000269" key="50">
    <source>
    </source>
</evidence>
<evidence type="ECO:0000269" key="51">
    <source>
    </source>
</evidence>
<evidence type="ECO:0000269" key="52">
    <source>
    </source>
</evidence>
<evidence type="ECO:0000269" key="53">
    <source>
    </source>
</evidence>
<evidence type="ECO:0000269" key="54">
    <source>
    </source>
</evidence>
<evidence type="ECO:0000269" key="55">
    <source>
    </source>
</evidence>
<evidence type="ECO:0000269" key="56">
    <source>
    </source>
</evidence>
<evidence type="ECO:0000269" key="57">
    <source>
    </source>
</evidence>
<evidence type="ECO:0000269" key="58">
    <source>
    </source>
</evidence>
<evidence type="ECO:0000269" key="59">
    <source>
    </source>
</evidence>
<evidence type="ECO:0000269" key="60">
    <source>
    </source>
</evidence>
<evidence type="ECO:0000269" key="61">
    <source>
    </source>
</evidence>
<evidence type="ECO:0000269" key="62">
    <source>
    </source>
</evidence>
<evidence type="ECO:0000269" key="63">
    <source>
    </source>
</evidence>
<evidence type="ECO:0000269" key="64">
    <source>
    </source>
</evidence>
<evidence type="ECO:0000269" key="65">
    <source>
    </source>
</evidence>
<evidence type="ECO:0000269" key="66">
    <source>
    </source>
</evidence>
<evidence type="ECO:0000269" key="67">
    <source>
    </source>
</evidence>
<evidence type="ECO:0000269" key="68">
    <source>
    </source>
</evidence>
<evidence type="ECO:0000269" key="69">
    <source>
    </source>
</evidence>
<evidence type="ECO:0000269" key="70">
    <source>
    </source>
</evidence>
<evidence type="ECO:0000269" key="71">
    <source>
    </source>
</evidence>
<evidence type="ECO:0000269" key="72">
    <source>
    </source>
</evidence>
<evidence type="ECO:0000269" key="73">
    <source>
    </source>
</evidence>
<evidence type="ECO:0000269" key="74">
    <source>
    </source>
</evidence>
<evidence type="ECO:0000269" key="75">
    <source>
    </source>
</evidence>
<evidence type="ECO:0000269" key="76">
    <source>
    </source>
</evidence>
<evidence type="ECO:0000269" key="77">
    <source>
    </source>
</evidence>
<evidence type="ECO:0000269" key="78">
    <source>
    </source>
</evidence>
<evidence type="ECO:0000269" key="79">
    <source>
    </source>
</evidence>
<evidence type="ECO:0000269" key="80">
    <source>
    </source>
</evidence>
<evidence type="ECO:0000269" key="81">
    <source>
    </source>
</evidence>
<evidence type="ECO:0000269" key="82">
    <source>
    </source>
</evidence>
<evidence type="ECO:0000269" key="83">
    <source>
    </source>
</evidence>
<evidence type="ECO:0000269" key="84">
    <source>
    </source>
</evidence>
<evidence type="ECO:0000269" key="85">
    <source>
    </source>
</evidence>
<evidence type="ECO:0000269" key="86">
    <source>
    </source>
</evidence>
<evidence type="ECO:0000269" key="87">
    <source>
    </source>
</evidence>
<evidence type="ECO:0000305" key="88"/>
<evidence type="ECO:0000305" key="89">
    <source>
    </source>
</evidence>
<evidence type="ECO:0000305" key="90">
    <source>
    </source>
</evidence>
<evidence type="ECO:0007829" key="91">
    <source>
        <dbReference type="PDB" id="2FXO"/>
    </source>
</evidence>
<evidence type="ECO:0007829" key="92">
    <source>
        <dbReference type="PDB" id="4DB1"/>
    </source>
</evidence>
<evidence type="ECO:0007829" key="93">
    <source>
        <dbReference type="PDB" id="4PA0"/>
    </source>
</evidence>
<evidence type="ECO:0007829" key="94">
    <source>
        <dbReference type="PDB" id="4XA3"/>
    </source>
</evidence>
<evidence type="ECO:0007829" key="95">
    <source>
        <dbReference type="PDB" id="4XA6"/>
    </source>
</evidence>
<evidence type="ECO:0007829" key="96">
    <source>
        <dbReference type="PDB" id="5CHX"/>
    </source>
</evidence>
<evidence type="ECO:0007829" key="97">
    <source>
        <dbReference type="PDB" id="5CJ1"/>
    </source>
</evidence>
<evidence type="ECO:0007829" key="98">
    <source>
        <dbReference type="PDB" id="5CJ4"/>
    </source>
</evidence>
<evidence type="ECO:0007829" key="99">
    <source>
        <dbReference type="PDB" id="5WLQ"/>
    </source>
</evidence>
<evidence type="ECO:0007829" key="100">
    <source>
        <dbReference type="PDB" id="5WME"/>
    </source>
</evidence>
<evidence type="ECO:0007829" key="101">
    <source>
        <dbReference type="PDB" id="6PF2"/>
    </source>
</evidence>
<evidence type="ECO:0007829" key="102">
    <source>
        <dbReference type="PDB" id="8EFH"/>
    </source>
</evidence>
<evidence type="ECO:0007829" key="103">
    <source>
        <dbReference type="PDB" id="8EFI"/>
    </source>
</evidence>